<keyword id="KW-0010">Activator</keyword>
<keyword id="KW-0025">Alternative splicing</keyword>
<keyword id="KW-0053">Apoptosis</keyword>
<keyword id="KW-0219">Diabetes mellitus</keyword>
<keyword id="KW-0225">Disease variant</keyword>
<keyword id="KW-0238">DNA-binding</keyword>
<keyword id="KW-0479">Metal-binding</keyword>
<keyword id="KW-0539">Nucleus</keyword>
<keyword id="KW-0597">Phosphoprotein</keyword>
<keyword id="KW-1267">Proteomics identification</keyword>
<keyword id="KW-1185">Reference proteome</keyword>
<keyword id="KW-0677">Repeat</keyword>
<keyword id="KW-0678">Repressor</keyword>
<keyword id="KW-0804">Transcription</keyword>
<keyword id="KW-0805">Transcription regulation</keyword>
<keyword id="KW-0862">Zinc</keyword>
<keyword id="KW-0863">Zinc-finger</keyword>
<name>KLF11_HUMAN</name>
<organism>
    <name type="scientific">Homo sapiens</name>
    <name type="common">Human</name>
    <dbReference type="NCBI Taxonomy" id="9606"/>
    <lineage>
        <taxon>Eukaryota</taxon>
        <taxon>Metazoa</taxon>
        <taxon>Chordata</taxon>
        <taxon>Craniata</taxon>
        <taxon>Vertebrata</taxon>
        <taxon>Euteleostomi</taxon>
        <taxon>Mammalia</taxon>
        <taxon>Eutheria</taxon>
        <taxon>Euarchontoglires</taxon>
        <taxon>Primates</taxon>
        <taxon>Haplorrhini</taxon>
        <taxon>Catarrhini</taxon>
        <taxon>Hominidae</taxon>
        <taxon>Homo</taxon>
    </lineage>
</organism>
<dbReference type="EMBL" id="AF028008">
    <property type="protein sequence ID" value="AAC61880.1"/>
    <property type="molecule type" value="mRNA"/>
</dbReference>
<dbReference type="EMBL" id="AF272830">
    <property type="protein sequence ID" value="AAF75793.1"/>
    <property type="molecule type" value="mRNA"/>
</dbReference>
<dbReference type="EMBL" id="AK302880">
    <property type="protein sequence ID" value="BAG64059.1"/>
    <property type="molecule type" value="mRNA"/>
</dbReference>
<dbReference type="EMBL" id="AC104794">
    <property type="status" value="NOT_ANNOTATED_CDS"/>
    <property type="molecule type" value="Genomic_DNA"/>
</dbReference>
<dbReference type="EMBL" id="CH471053">
    <property type="protein sequence ID" value="EAX00972.1"/>
    <property type="molecule type" value="Genomic_DNA"/>
</dbReference>
<dbReference type="EMBL" id="BC063286">
    <property type="protein sequence ID" value="AAH63286.1"/>
    <property type="molecule type" value="mRNA"/>
</dbReference>
<dbReference type="EMBL" id="BC069383">
    <property type="protein sequence ID" value="AAH69383.1"/>
    <property type="molecule type" value="mRNA"/>
</dbReference>
<dbReference type="EMBL" id="BC074922">
    <property type="protein sequence ID" value="AAH74922.1"/>
    <property type="molecule type" value="mRNA"/>
</dbReference>
<dbReference type="CCDS" id="CCDS1668.1">
    <molecule id="O14901-1"/>
</dbReference>
<dbReference type="CCDS" id="CCDS54333.1">
    <molecule id="O14901-2"/>
</dbReference>
<dbReference type="RefSeq" id="NP_001171187.1">
    <molecule id="O14901-2"/>
    <property type="nucleotide sequence ID" value="NM_001177716.2"/>
</dbReference>
<dbReference type="RefSeq" id="NP_001171189.1">
    <molecule id="O14901-2"/>
    <property type="nucleotide sequence ID" value="NM_001177718.2"/>
</dbReference>
<dbReference type="RefSeq" id="NP_003588.1">
    <molecule id="O14901-1"/>
    <property type="nucleotide sequence ID" value="NM_003597.5"/>
</dbReference>
<dbReference type="RefSeq" id="XP_047301981.1">
    <molecule id="O14901-2"/>
    <property type="nucleotide sequence ID" value="XM_047446025.1"/>
</dbReference>
<dbReference type="RefSeq" id="XP_054200179.1">
    <molecule id="O14901-2"/>
    <property type="nucleotide sequence ID" value="XM_054344204.1"/>
</dbReference>
<dbReference type="SMR" id="O14901"/>
<dbReference type="BioGRID" id="114040">
    <property type="interactions" value="21"/>
</dbReference>
<dbReference type="ELM" id="O14901"/>
<dbReference type="FunCoup" id="O14901">
    <property type="interactions" value="1393"/>
</dbReference>
<dbReference type="IntAct" id="O14901">
    <property type="interactions" value="238"/>
</dbReference>
<dbReference type="STRING" id="9606.ENSP00000307023"/>
<dbReference type="GlyGen" id="O14901">
    <property type="glycosylation" value="1 site"/>
</dbReference>
<dbReference type="iPTMnet" id="O14901"/>
<dbReference type="PhosphoSitePlus" id="O14901"/>
<dbReference type="BioMuta" id="KLF11"/>
<dbReference type="jPOST" id="O14901"/>
<dbReference type="MassIVE" id="O14901"/>
<dbReference type="PaxDb" id="9606-ENSP00000307023"/>
<dbReference type="PeptideAtlas" id="O14901"/>
<dbReference type="ProteomicsDB" id="48287">
    <molecule id="O14901-1"/>
</dbReference>
<dbReference type="ProteomicsDB" id="48288">
    <molecule id="O14901-2"/>
</dbReference>
<dbReference type="Antibodypedia" id="12498">
    <property type="antibodies" value="365 antibodies from 33 providers"/>
</dbReference>
<dbReference type="DNASU" id="8462"/>
<dbReference type="Ensembl" id="ENST00000305883.6">
    <molecule id="O14901-1"/>
    <property type="protein sequence ID" value="ENSP00000307023.1"/>
    <property type="gene ID" value="ENSG00000172059.11"/>
</dbReference>
<dbReference type="Ensembl" id="ENST00000535335.1">
    <molecule id="O14901-2"/>
    <property type="protein sequence ID" value="ENSP00000442722.1"/>
    <property type="gene ID" value="ENSG00000172059.11"/>
</dbReference>
<dbReference type="Ensembl" id="ENST00000540845.5">
    <molecule id="O14901-2"/>
    <property type="protein sequence ID" value="ENSP00000444690.1"/>
    <property type="gene ID" value="ENSG00000172059.11"/>
</dbReference>
<dbReference type="GeneID" id="8462"/>
<dbReference type="KEGG" id="hsa:8462"/>
<dbReference type="MANE-Select" id="ENST00000305883.6">
    <property type="protein sequence ID" value="ENSP00000307023.1"/>
    <property type="RefSeq nucleotide sequence ID" value="NM_003597.5"/>
    <property type="RefSeq protein sequence ID" value="NP_003588.1"/>
</dbReference>
<dbReference type="UCSC" id="uc010yjc.2">
    <molecule id="O14901-1"/>
    <property type="organism name" value="human"/>
</dbReference>
<dbReference type="AGR" id="HGNC:11811"/>
<dbReference type="CTD" id="8462"/>
<dbReference type="DisGeNET" id="8462"/>
<dbReference type="GeneCards" id="KLF11"/>
<dbReference type="GeneReviews" id="KLF11"/>
<dbReference type="HGNC" id="HGNC:11811">
    <property type="gene designation" value="KLF11"/>
</dbReference>
<dbReference type="HPA" id="ENSG00000172059">
    <property type="expression patterns" value="Low tissue specificity"/>
</dbReference>
<dbReference type="MalaCards" id="KLF11"/>
<dbReference type="MIM" id="603301">
    <property type="type" value="gene"/>
</dbReference>
<dbReference type="MIM" id="606391">
    <property type="type" value="phenotype"/>
</dbReference>
<dbReference type="MIM" id="610508">
    <property type="type" value="phenotype"/>
</dbReference>
<dbReference type="neXtProt" id="NX_O14901"/>
<dbReference type="OpenTargets" id="ENSG00000172059"/>
<dbReference type="Orphanet" id="552">
    <property type="disease" value="MODY"/>
</dbReference>
<dbReference type="PharmGKB" id="PA36518"/>
<dbReference type="VEuPathDB" id="HostDB:ENSG00000172059"/>
<dbReference type="eggNOG" id="KOG1721">
    <property type="taxonomic scope" value="Eukaryota"/>
</dbReference>
<dbReference type="GeneTree" id="ENSGT00940000155982"/>
<dbReference type="HOGENOM" id="CLU_046370_0_0_1"/>
<dbReference type="InParanoid" id="O14901"/>
<dbReference type="OMA" id="QSCAPQM"/>
<dbReference type="OrthoDB" id="654211at2759"/>
<dbReference type="PAN-GO" id="O14901">
    <property type="GO annotations" value="3 GO annotations based on evolutionary models"/>
</dbReference>
<dbReference type="PhylomeDB" id="O14901"/>
<dbReference type="TreeFam" id="TF315506"/>
<dbReference type="PathwayCommons" id="O14901"/>
<dbReference type="SignaLink" id="O14901"/>
<dbReference type="SIGNOR" id="O14901"/>
<dbReference type="BioGRID-ORCS" id="8462">
    <property type="hits" value="19 hits in 1187 CRISPR screens"/>
</dbReference>
<dbReference type="ChiTaRS" id="KLF11">
    <property type="organism name" value="human"/>
</dbReference>
<dbReference type="GeneWiki" id="KLF11"/>
<dbReference type="GenomeRNAi" id="8462"/>
<dbReference type="Pharos" id="O14901">
    <property type="development level" value="Tbio"/>
</dbReference>
<dbReference type="PRO" id="PR:O14901"/>
<dbReference type="Proteomes" id="UP000005640">
    <property type="component" value="Chromosome 2"/>
</dbReference>
<dbReference type="RNAct" id="O14901">
    <property type="molecule type" value="protein"/>
</dbReference>
<dbReference type="Bgee" id="ENSG00000172059">
    <property type="expression patterns" value="Expressed in secondary oocyte and 176 other cell types or tissues"/>
</dbReference>
<dbReference type="ExpressionAtlas" id="O14901">
    <property type="expression patterns" value="baseline and differential"/>
</dbReference>
<dbReference type="GO" id="GO:0000785">
    <property type="term" value="C:chromatin"/>
    <property type="evidence" value="ECO:0000247"/>
    <property type="project" value="NTNU_SB"/>
</dbReference>
<dbReference type="GO" id="GO:0005829">
    <property type="term" value="C:cytosol"/>
    <property type="evidence" value="ECO:0000314"/>
    <property type="project" value="HPA"/>
</dbReference>
<dbReference type="GO" id="GO:0005925">
    <property type="term" value="C:focal adhesion"/>
    <property type="evidence" value="ECO:0000314"/>
    <property type="project" value="HPA"/>
</dbReference>
<dbReference type="GO" id="GO:0016604">
    <property type="term" value="C:nuclear body"/>
    <property type="evidence" value="ECO:0000314"/>
    <property type="project" value="HPA"/>
</dbReference>
<dbReference type="GO" id="GO:0005654">
    <property type="term" value="C:nucleoplasm"/>
    <property type="evidence" value="ECO:0000314"/>
    <property type="project" value="HPA"/>
</dbReference>
<dbReference type="GO" id="GO:0005634">
    <property type="term" value="C:nucleus"/>
    <property type="evidence" value="ECO:0000304"/>
    <property type="project" value="ProtInc"/>
</dbReference>
<dbReference type="GO" id="GO:0003700">
    <property type="term" value="F:DNA-binding transcription factor activity"/>
    <property type="evidence" value="ECO:0000304"/>
    <property type="project" value="ProtInc"/>
</dbReference>
<dbReference type="GO" id="GO:0000981">
    <property type="term" value="F:DNA-binding transcription factor activity, RNA polymerase II-specific"/>
    <property type="evidence" value="ECO:0000314"/>
    <property type="project" value="BHF-UCL"/>
</dbReference>
<dbReference type="GO" id="GO:0000978">
    <property type="term" value="F:RNA polymerase II cis-regulatory region sequence-specific DNA binding"/>
    <property type="evidence" value="ECO:0000318"/>
    <property type="project" value="GO_Central"/>
</dbReference>
<dbReference type="GO" id="GO:1990837">
    <property type="term" value="F:sequence-specific double-stranded DNA binding"/>
    <property type="evidence" value="ECO:0000314"/>
    <property type="project" value="ARUK-UCL"/>
</dbReference>
<dbReference type="GO" id="GO:0000976">
    <property type="term" value="F:transcription cis-regulatory region binding"/>
    <property type="evidence" value="ECO:0000314"/>
    <property type="project" value="BHF-UCL"/>
</dbReference>
<dbReference type="GO" id="GO:0008270">
    <property type="term" value="F:zinc ion binding"/>
    <property type="evidence" value="ECO:0007669"/>
    <property type="project" value="UniProtKB-KW"/>
</dbReference>
<dbReference type="GO" id="GO:0006915">
    <property type="term" value="P:apoptotic process"/>
    <property type="evidence" value="ECO:0007669"/>
    <property type="project" value="UniProtKB-KW"/>
</dbReference>
<dbReference type="GO" id="GO:1901653">
    <property type="term" value="P:cellular response to peptide"/>
    <property type="evidence" value="ECO:0007669"/>
    <property type="project" value="Ensembl"/>
</dbReference>
<dbReference type="GO" id="GO:0008285">
    <property type="term" value="P:negative regulation of cell population proliferation"/>
    <property type="evidence" value="ECO:0000314"/>
    <property type="project" value="BHF-UCL"/>
</dbReference>
<dbReference type="GO" id="GO:0000122">
    <property type="term" value="P:negative regulation of transcription by RNA polymerase II"/>
    <property type="evidence" value="ECO:0000314"/>
    <property type="project" value="BHF-UCL"/>
</dbReference>
<dbReference type="GO" id="GO:0043065">
    <property type="term" value="P:positive regulation of apoptotic process"/>
    <property type="evidence" value="ECO:0000314"/>
    <property type="project" value="BHF-UCL"/>
</dbReference>
<dbReference type="GO" id="GO:2000045">
    <property type="term" value="P:regulation of G1/S transition of mitotic cell cycle"/>
    <property type="evidence" value="ECO:0000314"/>
    <property type="project" value="BHF-UCL"/>
</dbReference>
<dbReference type="GO" id="GO:0006357">
    <property type="term" value="P:regulation of transcription by RNA polymerase II"/>
    <property type="evidence" value="ECO:0000318"/>
    <property type="project" value="GO_Central"/>
</dbReference>
<dbReference type="CDD" id="cd21584">
    <property type="entry name" value="KLF11_N"/>
    <property type="match status" value="1"/>
</dbReference>
<dbReference type="FunFam" id="3.30.160.60:FF:000134">
    <property type="entry name" value="Krueppel-like factor 11"/>
    <property type="match status" value="1"/>
</dbReference>
<dbReference type="FunFam" id="3.30.160.60:FF:000018">
    <property type="entry name" value="Krueppel-like factor 15"/>
    <property type="match status" value="1"/>
</dbReference>
<dbReference type="FunFam" id="3.30.160.60:FF:000205">
    <property type="entry name" value="Putative Krueppel-like factor 10"/>
    <property type="match status" value="1"/>
</dbReference>
<dbReference type="Gene3D" id="3.30.160.60">
    <property type="entry name" value="Classic Zinc Finger"/>
    <property type="match status" value="3"/>
</dbReference>
<dbReference type="InterPro" id="IPR036236">
    <property type="entry name" value="Znf_C2H2_sf"/>
</dbReference>
<dbReference type="InterPro" id="IPR013087">
    <property type="entry name" value="Znf_C2H2_type"/>
</dbReference>
<dbReference type="PANTHER" id="PTHR23235:SF65">
    <property type="entry name" value="KRUEPPEL-LIKE FACTOR 11"/>
    <property type="match status" value="1"/>
</dbReference>
<dbReference type="PANTHER" id="PTHR23235">
    <property type="entry name" value="KRUEPPEL-LIKE TRANSCRIPTION FACTOR"/>
    <property type="match status" value="1"/>
</dbReference>
<dbReference type="Pfam" id="PF00096">
    <property type="entry name" value="zf-C2H2"/>
    <property type="match status" value="3"/>
</dbReference>
<dbReference type="SMART" id="SM00355">
    <property type="entry name" value="ZnF_C2H2"/>
    <property type="match status" value="3"/>
</dbReference>
<dbReference type="SUPFAM" id="SSF57667">
    <property type="entry name" value="beta-beta-alpha zinc fingers"/>
    <property type="match status" value="2"/>
</dbReference>
<dbReference type="PROSITE" id="PS00028">
    <property type="entry name" value="ZINC_FINGER_C2H2_1"/>
    <property type="match status" value="3"/>
</dbReference>
<dbReference type="PROSITE" id="PS50157">
    <property type="entry name" value="ZINC_FINGER_C2H2_2"/>
    <property type="match status" value="3"/>
</dbReference>
<protein>
    <recommendedName>
        <fullName>Krueppel-like factor 11</fullName>
    </recommendedName>
    <alternativeName>
        <fullName>Transforming growth factor-beta-inducible early growth response protein 2</fullName>
        <shortName>TGFB-inducible early growth response protein 2</shortName>
        <shortName>TIEG-2</shortName>
    </alternativeName>
</protein>
<gene>
    <name type="primary">KLF11</name>
    <name type="synonym">FKLF</name>
    <name type="synonym">TIEG2</name>
</gene>
<comment type="function">
    <text evidence="1 4 6">Transcription factor (PubMed:10207080, PubMed:9748269). Activates the epsilon- and gamma-globin gene promoters and, to a much lower degree, the beta-globin gene and represses promoters containing SP1-like binding inhibiting cell growth (PubMed:10207080, PubMed:16131492, PubMed:9748269). Represses transcription of SMAD7 which enhances TGF-beta signaling (By similarity). Induces apoptosis (By similarity).</text>
</comment>
<comment type="subunit">
    <text evidence="5">Interacts with SIN3A.</text>
</comment>
<comment type="interaction">
    <interactant intactId="EBI-948266">
        <id>O14901</id>
    </interactant>
    <interactant intactId="EBI-8466265">
        <id>Q96MA6</id>
        <label>AK8</label>
    </interactant>
    <organismsDiffer>false</organismsDiffer>
    <experiments>3</experiments>
</comment>
<comment type="interaction">
    <interactant intactId="EBI-948266">
        <id>O14901</id>
    </interactant>
    <interactant intactId="EBI-11022349">
        <id>Q99996-3</id>
        <label>AKAP9</label>
    </interactant>
    <organismsDiffer>false</organismsDiffer>
    <experiments>3</experiments>
</comment>
<comment type="interaction">
    <interactant intactId="EBI-948266">
        <id>O14901</id>
    </interactant>
    <interactant intactId="EBI-11893530">
        <id>Q9NP70</id>
        <label>AMBN</label>
    </interactant>
    <organismsDiffer>false</organismsDiffer>
    <experiments>3</experiments>
</comment>
<comment type="interaction">
    <interactant intactId="EBI-948266">
        <id>O14901</id>
    </interactant>
    <interactant intactId="EBI-25840993">
        <id>Q6ZTN6-2</id>
        <label>ANKRD13D</label>
    </interactant>
    <organismsDiffer>false</organismsDiffer>
    <experiments>3</experiments>
</comment>
<comment type="interaction">
    <interactant intactId="EBI-948266">
        <id>O14901</id>
    </interactant>
    <interactant intactId="EBI-2556852">
        <id>P09525</id>
        <label>ANXA4</label>
    </interactant>
    <organismsDiffer>false</organismsDiffer>
    <experiments>3</experiments>
</comment>
<comment type="interaction">
    <interactant intactId="EBI-948266">
        <id>O14901</id>
    </interactant>
    <interactant intactId="EBI-2556915">
        <id>P13928</id>
        <label>ANXA8</label>
    </interactant>
    <organismsDiffer>false</organismsDiffer>
    <experiments>3</experiments>
</comment>
<comment type="interaction">
    <interactant intactId="EBI-948266">
        <id>O14901</id>
    </interactant>
    <interactant intactId="EBI-77613">
        <id>P05067</id>
        <label>APP</label>
    </interactant>
    <organismsDiffer>false</organismsDiffer>
    <experiments>3</experiments>
</comment>
<comment type="interaction">
    <interactant intactId="EBI-948266">
        <id>O14901</id>
    </interactant>
    <interactant intactId="EBI-743771">
        <id>Q92624</id>
        <label>APPBP2</label>
    </interactant>
    <organismsDiffer>false</organismsDiffer>
    <experiments>3</experiments>
</comment>
<comment type="interaction">
    <interactant intactId="EBI-948266">
        <id>O14901</id>
    </interactant>
    <interactant intactId="EBI-19124986">
        <id>O94778</id>
        <label>AQP8</label>
    </interactant>
    <organismsDiffer>false</organismsDiffer>
    <experiments>3</experiments>
</comment>
<comment type="interaction">
    <interactant intactId="EBI-948266">
        <id>O14901</id>
    </interactant>
    <interactant intactId="EBI-22012297">
        <id>Q52LW3-2</id>
        <label>ARHGAP29</label>
    </interactant>
    <organismsDiffer>false</organismsDiffer>
    <experiments>3</experiments>
</comment>
<comment type="interaction">
    <interactant intactId="EBI-948266">
        <id>O14901</id>
    </interactant>
    <interactant intactId="EBI-3449344">
        <id>Q9Y2Y0</id>
        <label>ARL2BP</label>
    </interactant>
    <organismsDiffer>false</organismsDiffer>
    <experiments>3</experiments>
</comment>
<comment type="interaction">
    <interactant intactId="EBI-948266">
        <id>O14901</id>
    </interactant>
    <interactant intactId="EBI-707573">
        <id>Q8WXK3</id>
        <label>ASB13</label>
    </interactant>
    <organismsDiffer>false</organismsDiffer>
    <experiments>3</experiments>
</comment>
<comment type="interaction">
    <interactant intactId="EBI-948266">
        <id>O14901</id>
    </interactant>
    <interactant intactId="EBI-14199987">
        <id>Q9Y575-3</id>
        <label>ASB3</label>
    </interactant>
    <organismsDiffer>false</organismsDiffer>
    <experiments>3</experiments>
</comment>
<comment type="interaction">
    <interactant intactId="EBI-948266">
        <id>O14901</id>
    </interactant>
    <interactant intactId="EBI-25843552">
        <id>Q96DX5-3</id>
        <label>ASB9</label>
    </interactant>
    <organismsDiffer>false</organismsDiffer>
    <experiments>3</experiments>
</comment>
<comment type="interaction">
    <interactant intactId="EBI-948266">
        <id>O14901</id>
    </interactant>
    <interactant intactId="EBI-9089489">
        <id>Q96FT7-4</id>
        <label>ASIC4</label>
    </interactant>
    <organismsDiffer>false</organismsDiffer>
    <experiments>3</experiments>
</comment>
<comment type="interaction">
    <interactant intactId="EBI-948266">
        <id>O14901</id>
    </interactant>
    <interactant intactId="EBI-718459">
        <id>Q9UII2</id>
        <label>ATP5IF1</label>
    </interactant>
    <organismsDiffer>false</organismsDiffer>
    <experiments>3</experiments>
</comment>
<comment type="interaction">
    <interactant intactId="EBI-948266">
        <id>O14901</id>
    </interactant>
    <interactant intactId="EBI-2891281">
        <id>P15313</id>
        <label>ATP6V1B1</label>
    </interactant>
    <organismsDiffer>false</organismsDiffer>
    <experiments>3</experiments>
</comment>
<comment type="interaction">
    <interactant intactId="EBI-948266">
        <id>O14901</id>
    </interactant>
    <interactant intactId="EBI-742750">
        <id>Q8TBE0</id>
        <label>BAHD1</label>
    </interactant>
    <organismsDiffer>false</organismsDiffer>
    <experiments>3</experiments>
</comment>
<comment type="interaction">
    <interactant intactId="EBI-948266">
        <id>O14901</id>
    </interactant>
    <interactant intactId="EBI-1050106">
        <id>O75934</id>
        <label>BCAS2</label>
    </interactant>
    <organismsDiffer>false</organismsDiffer>
    <experiments>3</experiments>
</comment>
<comment type="interaction">
    <interactant intactId="EBI-948266">
        <id>O14901</id>
    </interactant>
    <interactant intactId="EBI-25834445">
        <id>P54687-4</id>
        <label>BCAT1</label>
    </interactant>
    <organismsDiffer>false</organismsDiffer>
    <experiments>3</experiments>
</comment>
<comment type="interaction">
    <interactant intactId="EBI-948266">
        <id>O14901</id>
    </interactant>
    <interactant intactId="EBI-7936069">
        <id>P06276</id>
        <label>BCHE</label>
    </interactant>
    <organismsDiffer>false</organismsDiffer>
    <experiments>3</experiments>
</comment>
<comment type="interaction">
    <interactant intactId="EBI-948266">
        <id>O14901</id>
    </interactant>
    <interactant intactId="EBI-949378">
        <id>Q14457</id>
        <label>BECN1</label>
    </interactant>
    <organismsDiffer>false</organismsDiffer>
    <experiments>3</experiments>
</comment>
<comment type="interaction">
    <interactant intactId="EBI-948266">
        <id>O14901</id>
    </interactant>
    <interactant intactId="EBI-3919268">
        <id>Q96LC9</id>
        <label>BMF</label>
    </interactant>
    <organismsDiffer>false</organismsDiffer>
    <experiments>3</experiments>
</comment>
<comment type="interaction">
    <interactant intactId="EBI-948266">
        <id>O14901</id>
    </interactant>
    <interactant intactId="EBI-747707">
        <id>Q969J3</id>
        <label>BORCS5</label>
    </interactant>
    <organismsDiffer>false</organismsDiffer>
    <experiments>3</experiments>
</comment>
<comment type="interaction">
    <interactant intactId="EBI-948266">
        <id>O14901</id>
    </interactant>
    <interactant intactId="EBI-10826195">
        <id>Q6PJG6</id>
        <label>BRAT1</label>
    </interactant>
    <organismsDiffer>false</organismsDiffer>
    <experiments>3</experiments>
</comment>
<comment type="interaction">
    <interactant intactId="EBI-948266">
        <id>O14901</id>
    </interactant>
    <interactant intactId="EBI-2837444">
        <id>Q8WUW1</id>
        <label>BRK1</label>
    </interactant>
    <organismsDiffer>false</organismsDiffer>
    <experiments>3</experiments>
</comment>
<comment type="interaction">
    <interactant intactId="EBI-948266">
        <id>O14901</id>
    </interactant>
    <interactant intactId="EBI-12108466">
        <id>Q9H0W9-3</id>
        <label>C11orf54</label>
    </interactant>
    <organismsDiffer>false</organismsDiffer>
    <experiments>3</experiments>
</comment>
<comment type="interaction">
    <interactant intactId="EBI-948266">
        <id>O14901</id>
    </interactant>
    <interactant intactId="EBI-21771960">
        <id>Q8IVU9</id>
        <label>CABCOCO1</label>
    </interactant>
    <organismsDiffer>false</organismsDiffer>
    <experiments>3</experiments>
</comment>
<comment type="interaction">
    <interactant intactId="EBI-948266">
        <id>O14901</id>
    </interactant>
    <interactant intactId="EBI-3951758">
        <id>O95503</id>
        <label>CBX6</label>
    </interactant>
    <organismsDiffer>false</organismsDiffer>
    <experiments>3</experiments>
</comment>
<comment type="interaction">
    <interactant intactId="EBI-948266">
        <id>O14901</id>
    </interactant>
    <interactant intactId="EBI-10181422">
        <id>A0A1B0GWI1</id>
        <label>CCDC196</label>
    </interactant>
    <organismsDiffer>false</organismsDiffer>
    <experiments>3</experiments>
</comment>
<comment type="interaction">
    <interactant intactId="EBI-948266">
        <id>O14901</id>
    </interactant>
    <interactant intactId="EBI-12300031">
        <id>Q9NNX6-10</id>
        <label>CD209</label>
    </interactant>
    <organismsDiffer>false</organismsDiffer>
    <experiments>3</experiments>
</comment>
<comment type="interaction">
    <interactant intactId="EBI-948266">
        <id>O14901</id>
    </interactant>
    <interactant intactId="EBI-9680942">
        <id>Q9HCU0</id>
        <label>CD248</label>
    </interactant>
    <organismsDiffer>false</organismsDiffer>
    <experiments>3</experiments>
</comment>
<comment type="interaction">
    <interactant intactId="EBI-948266">
        <id>O14901</id>
    </interactant>
    <interactant intactId="EBI-396137">
        <id>Q9UJX2</id>
        <label>CDC23</label>
    </interactant>
    <organismsDiffer>false</organismsDiffer>
    <experiments>3</experiments>
</comment>
<comment type="interaction">
    <interactant intactId="EBI-948266">
        <id>O14901</id>
    </interactant>
    <interactant intactId="EBI-1210604">
        <id>Q7Z7K6</id>
        <label>CENPV</label>
    </interactant>
    <organismsDiffer>false</organismsDiffer>
    <experiments>3</experiments>
</comment>
<comment type="interaction">
    <interactant intactId="EBI-948266">
        <id>O14901</id>
    </interactant>
    <interactant intactId="EBI-747776">
        <id>Q53EZ4</id>
        <label>CEP55</label>
    </interactant>
    <organismsDiffer>false</organismsDiffer>
    <experiments>3</experiments>
</comment>
<comment type="interaction">
    <interactant intactId="EBI-948266">
        <id>O14901</id>
    </interactant>
    <interactant intactId="EBI-739624">
        <id>Q8NHQ1</id>
        <label>CEP70</label>
    </interactant>
    <organismsDiffer>false</organismsDiffer>
    <experiments>3</experiments>
</comment>
<comment type="interaction">
    <interactant intactId="EBI-948266">
        <id>O14901</id>
    </interactant>
    <interactant intactId="EBI-749253">
        <id>Q8WUX9</id>
        <label>CHMP7</label>
    </interactant>
    <organismsDiffer>false</organismsDiffer>
    <experiments>3</experiments>
</comment>
<comment type="interaction">
    <interactant intactId="EBI-948266">
        <id>O14901</id>
    </interactant>
    <interactant intactId="EBI-25836090">
        <id>Q6PJW8-3</id>
        <label>CNST</label>
    </interactant>
    <organismsDiffer>false</organismsDiffer>
    <experiments>3</experiments>
</comment>
<comment type="interaction">
    <interactant intactId="EBI-948266">
        <id>O14901</id>
    </interactant>
    <interactant intactId="EBI-9091495">
        <id>Q96JB2-2</id>
        <label>COG3</label>
    </interactant>
    <organismsDiffer>false</organismsDiffer>
    <experiments>3</experiments>
</comment>
<comment type="interaction">
    <interactant intactId="EBI-948266">
        <id>O14901</id>
    </interactant>
    <interactant intactId="EBI-720875">
        <id>Q96MW5</id>
        <label>COG8</label>
    </interactant>
    <organismsDiffer>false</organismsDiffer>
    <experiments>3</experiments>
</comment>
<comment type="interaction">
    <interactant intactId="EBI-948266">
        <id>O14901</id>
    </interactant>
    <interactant intactId="EBI-25836642">
        <id>Q8NE08</id>
        <label>COL25A1</label>
    </interactant>
    <organismsDiffer>false</organismsDiffer>
    <experiments>3</experiments>
</comment>
<comment type="interaction">
    <interactant intactId="EBI-948266">
        <id>O14901</id>
    </interactant>
    <interactant intactId="EBI-1056574">
        <id>P13073</id>
        <label>COX4I1</label>
    </interactant>
    <organismsDiffer>false</organismsDiffer>
    <experiments>3</experiments>
</comment>
<comment type="interaction">
    <interactant intactId="EBI-948266">
        <id>O14901</id>
    </interactant>
    <interactant intactId="EBI-25876196">
        <id>P24310</id>
        <label>COX7A1</label>
    </interactant>
    <organismsDiffer>false</organismsDiffer>
    <experiments>3</experiments>
</comment>
<comment type="interaction">
    <interactant intactId="EBI-948266">
        <id>O14901</id>
    </interactant>
    <interactant intactId="EBI-739773">
        <id>Q9BSW2</id>
        <label>CRACR2A</label>
    </interactant>
    <organismsDiffer>false</organismsDiffer>
    <experiments>3</experiments>
</comment>
<comment type="interaction">
    <interactant intactId="EBI-948266">
        <id>O14901</id>
    </interactant>
    <interactant intactId="EBI-2510250">
        <id>Q96SW2</id>
        <label>CRBN</label>
    </interactant>
    <organismsDiffer>false</organismsDiffer>
    <experiments>3</experiments>
</comment>
<comment type="interaction">
    <interactant intactId="EBI-948266">
        <id>O14901</id>
    </interactant>
    <interactant intactId="EBI-2872414">
        <id>Q8IUI8</id>
        <label>CRLF3</label>
    </interactant>
    <organismsDiffer>false</organismsDiffer>
    <experiments>3</experiments>
</comment>
<comment type="interaction">
    <interactant intactId="EBI-948266">
        <id>O14901</id>
    </interactant>
    <interactant intactId="EBI-750444">
        <id>P53672</id>
        <label>CRYBA2</label>
    </interactant>
    <organismsDiffer>false</organismsDiffer>
    <experiments>3</experiments>
</comment>
<comment type="interaction">
    <interactant intactId="EBI-948266">
        <id>O14901</id>
    </interactant>
    <interactant intactId="EBI-1048143">
        <id>Q7L576</id>
        <label>CYFIP1</label>
    </interactant>
    <organismsDiffer>false</organismsDiffer>
    <experiments>3</experiments>
</comment>
<comment type="interaction">
    <interactant intactId="EBI-948266">
        <id>O14901</id>
    </interactant>
    <interactant intactId="EBI-1055930">
        <id>Q9NUQ9</id>
        <label>CYRIB</label>
    </interactant>
    <organismsDiffer>false</organismsDiffer>
    <experiments>3</experiments>
</comment>
<comment type="interaction">
    <interactant intactId="EBI-948266">
        <id>O14901</id>
    </interactant>
    <interactant intactId="EBI-751783">
        <id>Q9UJU6</id>
        <label>DBNL</label>
    </interactant>
    <organismsDiffer>false</organismsDiffer>
    <experiments>3</experiments>
</comment>
<comment type="interaction">
    <interactant intactId="EBI-948266">
        <id>O14901</id>
    </interactant>
    <interactant intactId="EBI-12091947">
        <id>O75935-2</id>
        <label>DCTN3</label>
    </interactant>
    <organismsDiffer>false</organismsDiffer>
    <experiments>3</experiments>
</comment>
<comment type="interaction">
    <interactant intactId="EBI-948266">
        <id>O14901</id>
    </interactant>
    <interactant intactId="EBI-748248">
        <id>Q8WTU0</id>
        <label>DDI1</label>
    </interactant>
    <organismsDiffer>false</organismsDiffer>
    <experiments>3</experiments>
</comment>
<comment type="interaction">
    <interactant intactId="EBI-948266">
        <id>O14901</id>
    </interactant>
    <interactant intactId="EBI-2805660">
        <id>Q14154</id>
        <label>DELE1</label>
    </interactant>
    <organismsDiffer>false</organismsDiffer>
    <experiments>3</experiments>
</comment>
<comment type="interaction">
    <interactant intactId="EBI-948266">
        <id>O14901</id>
    </interactant>
    <interactant intactId="EBI-954409">
        <id>Q9UBP4</id>
        <label>DKK3</label>
    </interactant>
    <organismsDiffer>false</organismsDiffer>
    <experiments>3</experiments>
</comment>
<comment type="interaction">
    <interactant intactId="EBI-948266">
        <id>O14901</id>
    </interactant>
    <interactant intactId="EBI-21529239">
        <id>Q86TI2-2</id>
        <label>DPP9</label>
    </interactant>
    <organismsDiffer>false</organismsDiffer>
    <experiments>3</experiments>
</comment>
<comment type="interaction">
    <interactant intactId="EBI-948266">
        <id>O14901</id>
    </interactant>
    <interactant intactId="EBI-12275416">
        <id>Q14117</id>
        <label>DPYS</label>
    </interactant>
    <organismsDiffer>false</organismsDiffer>
    <experiments>3</experiments>
</comment>
<comment type="interaction">
    <interactant intactId="EBI-948266">
        <id>O14901</id>
    </interactant>
    <interactant intactId="EBI-724653">
        <id>Q9BPU6</id>
        <label>DPYSL5</label>
    </interactant>
    <organismsDiffer>false</organismsDiffer>
    <experiments>3</experiments>
</comment>
<comment type="interaction">
    <interactant intactId="EBI-948266">
        <id>O14901</id>
    </interactant>
    <interactant intactId="EBI-1001144">
        <id>Q9H410</id>
        <label>DSN1</label>
    </interactant>
    <organismsDiffer>false</organismsDiffer>
    <experiments>3</experiments>
</comment>
<comment type="interaction">
    <interactant intactId="EBI-948266">
        <id>O14901</id>
    </interactant>
    <interactant intactId="EBI-372173">
        <id>O77932</id>
        <label>DXO</label>
    </interactant>
    <organismsDiffer>false</organismsDiffer>
    <experiments>3</experiments>
</comment>
<comment type="interaction">
    <interactant intactId="EBI-948266">
        <id>O14901</id>
    </interactant>
    <interactant intactId="EBI-7779316">
        <id>A0AVK6</id>
        <label>E2F8</label>
    </interactant>
    <organismsDiffer>false</organismsDiffer>
    <experiments>3</experiments>
</comment>
<comment type="interaction">
    <interactant intactId="EBI-948266">
        <id>O14901</id>
    </interactant>
    <interactant intactId="EBI-10178160">
        <id>H3BUJ7</id>
        <label>E4F1</label>
    </interactant>
    <organismsDiffer>false</organismsDiffer>
    <experiments>3</experiments>
</comment>
<comment type="interaction">
    <interactant intactId="EBI-948266">
        <id>O14901</id>
    </interactant>
    <interactant intactId="EBI-743105">
        <id>Q5JVL4</id>
        <label>EFHC1</label>
    </interactant>
    <organismsDiffer>false</organismsDiffer>
    <experiments>3</experiments>
</comment>
<comment type="interaction">
    <interactant intactId="EBI-948266">
        <id>O14901</id>
    </interactant>
    <interactant intactId="EBI-711990">
        <id>O00303</id>
        <label>EIF3F</label>
    </interactant>
    <organismsDiffer>false</organismsDiffer>
    <experiments>3</experiments>
</comment>
<comment type="interaction">
    <interactant intactId="EBI-948266">
        <id>O14901</id>
    </interactant>
    <interactant intactId="EBI-354344">
        <id>Q9UBQ5</id>
        <label>EIF3K</label>
    </interactant>
    <organismsDiffer>false</organismsDiffer>
    <experiments>3</experiments>
</comment>
<comment type="interaction">
    <interactant intactId="EBI-948266">
        <id>O14901</id>
    </interactant>
    <interactant intactId="EBI-373519">
        <id>Q9Y262</id>
        <label>EIF3L</label>
    </interactant>
    <organismsDiffer>false</organismsDiffer>
    <experiments>3</experiments>
</comment>
<comment type="interaction">
    <interactant intactId="EBI-948266">
        <id>O14901</id>
    </interactant>
    <interactant intactId="EBI-781527">
        <id>Q969X5</id>
        <label>ERGIC1</label>
    </interactant>
    <organismsDiffer>false</organismsDiffer>
    <experiments>3</experiments>
</comment>
<comment type="interaction">
    <interactant intactId="EBI-948266">
        <id>O14901</id>
    </interactant>
    <interactant intactId="EBI-10213520">
        <id>Q6NXG1</id>
        <label>ESRP1</label>
    </interactant>
    <organismsDiffer>false</organismsDiffer>
    <experiments>3</experiments>
</comment>
<comment type="interaction">
    <interactant intactId="EBI-948266">
        <id>O14901</id>
    </interactant>
    <interactant intactId="EBI-21567429">
        <id>Q6NXG1-3</id>
        <label>ESRP1</label>
    </interactant>
    <organismsDiffer>false</organismsDiffer>
    <experiments>3</experiments>
</comment>
<comment type="interaction">
    <interactant intactId="EBI-948266">
        <id>O14901</id>
    </interactant>
    <interactant intactId="EBI-3893327">
        <id>Q6P1L5</id>
        <label>FAM117B</label>
    </interactant>
    <organismsDiffer>false</organismsDiffer>
    <experiments>3</experiments>
</comment>
<comment type="interaction">
    <interactant intactId="EBI-948266">
        <id>O14901</id>
    </interactant>
    <interactant intactId="EBI-25835236">
        <id>Q49AJ0-4</id>
        <label>FAM135B</label>
    </interactant>
    <organismsDiffer>false</organismsDiffer>
    <experiments>3</experiments>
</comment>
<comment type="interaction">
    <interactant intactId="EBI-948266">
        <id>O14901</id>
    </interactant>
    <interactant intactId="EBI-12193763">
        <id>A1KXE4-2</id>
        <label>FAM168B</label>
    </interactant>
    <organismsDiffer>false</organismsDiffer>
    <experiments>3</experiments>
</comment>
<comment type="interaction">
    <interactant intactId="EBI-948266">
        <id>O14901</id>
    </interactant>
    <interactant intactId="EBI-81610">
        <id>O15287</id>
        <label>FANCG</label>
    </interactant>
    <organismsDiffer>false</organismsDiffer>
    <experiments>3</experiments>
</comment>
<comment type="interaction">
    <interactant intactId="EBI-948266">
        <id>O14901</id>
    </interactant>
    <interactant intactId="EBI-1045879">
        <id>Q8WVX9</id>
        <label>FAR1</label>
    </interactant>
    <organismsDiffer>false</organismsDiffer>
    <experiments>3</experiments>
</comment>
<comment type="interaction">
    <interactant intactId="EBI-948266">
        <id>O14901</id>
    </interactant>
    <interactant intactId="EBI-3909329">
        <id>Q9NSA1</id>
        <label>FGF21</label>
    </interactant>
    <organismsDiffer>false</organismsDiffer>
    <experiments>3</experiments>
</comment>
<comment type="interaction">
    <interactant intactId="EBI-948266">
        <id>O14901</id>
    </interactant>
    <interactant intactId="EBI-750641">
        <id>Q5TD97</id>
        <label>FHL5</label>
    </interactant>
    <organismsDiffer>false</organismsDiffer>
    <experiments>3</experiments>
</comment>
<comment type="interaction">
    <interactant intactId="EBI-948266">
        <id>O14901</id>
    </interactant>
    <interactant intactId="EBI-25905795">
        <id>Q9BQS8-2</id>
        <label>FYCO1</label>
    </interactant>
    <organismsDiffer>false</organismsDiffer>
    <experiments>3</experiments>
</comment>
<comment type="interaction">
    <interactant intactId="EBI-948266">
        <id>O14901</id>
    </interactant>
    <interactant intactId="EBI-10691738">
        <id>P06241-3</id>
        <label>FYN</label>
    </interactant>
    <organismsDiffer>false</organismsDiffer>
    <experiments>3</experiments>
</comment>
<comment type="interaction">
    <interactant intactId="EBI-948266">
        <id>O14901</id>
    </interactant>
    <interactant intactId="EBI-618189">
        <id>Q06547-2</id>
        <label>GABPB1</label>
    </interactant>
    <organismsDiffer>false</organismsDiffer>
    <experiments>3</experiments>
</comment>
<comment type="interaction">
    <interactant intactId="EBI-948266">
        <id>O14901</id>
    </interactant>
    <interactant intactId="EBI-9088619">
        <id>Q06547-3</id>
        <label>GABPB1</label>
    </interactant>
    <organismsDiffer>false</organismsDiffer>
    <experiments>3</experiments>
</comment>
<comment type="interaction">
    <interactant intactId="EBI-948266">
        <id>O14901</id>
    </interactant>
    <interactant intactId="EBI-23893155">
        <id>F2Z2M7</id>
        <label>GALNT10</label>
    </interactant>
    <organismsDiffer>false</organismsDiffer>
    <experiments>3</experiments>
</comment>
<comment type="interaction">
    <interactant intactId="EBI-948266">
        <id>O14901</id>
    </interactant>
    <interactant intactId="EBI-9090198">
        <id>P15976-2</id>
        <label>GATA1</label>
    </interactant>
    <organismsDiffer>false</organismsDiffer>
    <experiments>3</experiments>
</comment>
<comment type="interaction">
    <interactant intactId="EBI-948266">
        <id>O14901</id>
    </interactant>
    <interactant intactId="EBI-2857315">
        <id>Q9BRX5</id>
        <label>GINS3</label>
    </interactant>
    <organismsDiffer>false</organismsDiffer>
    <experiments>3</experiments>
</comment>
<comment type="interaction">
    <interactant intactId="EBI-948266">
        <id>O14901</id>
    </interactant>
    <interactant intactId="EBI-3933251">
        <id>Q9NS71</id>
        <label>GKN1</label>
    </interactant>
    <organismsDiffer>false</organismsDiffer>
    <experiments>3</experiments>
</comment>
<comment type="interaction">
    <interactant intactId="EBI-948266">
        <id>O14901</id>
    </interactant>
    <interactant intactId="EBI-750953">
        <id>Q96IJ6</id>
        <label>GMPPA</label>
    </interactant>
    <organismsDiffer>false</organismsDiffer>
    <experiments>3</experiments>
</comment>
<comment type="interaction">
    <interactant intactId="EBI-948266">
        <id>O14901</id>
    </interactant>
    <interactant intactId="EBI-7187133">
        <id>P51674</id>
        <label>GPM6A</label>
    </interactant>
    <organismsDiffer>false</organismsDiffer>
    <experiments>3</experiments>
</comment>
<comment type="interaction">
    <interactant intactId="EBI-948266">
        <id>O14901</id>
    </interactant>
    <interactant intactId="EBI-11603368">
        <id>Q9H9Y4</id>
        <label>GPN2</label>
    </interactant>
    <organismsDiffer>false</organismsDiffer>
    <experiments>3</experiments>
</comment>
<comment type="interaction">
    <interactant intactId="EBI-948266">
        <id>O14901</id>
    </interactant>
    <interactant intactId="EBI-725259">
        <id>Q93077</id>
        <label>H2AC6</label>
    </interactant>
    <organismsDiffer>false</organismsDiffer>
    <experiments>3</experiments>
</comment>
<comment type="interaction">
    <interactant intactId="EBI-948266">
        <id>O14901</id>
    </interactant>
    <interactant intactId="EBI-2868501">
        <id>Q6NXT2</id>
        <label>H3-5</label>
    </interactant>
    <organismsDiffer>false</organismsDiffer>
    <experiments>3</experiments>
</comment>
<comment type="interaction">
    <interactant intactId="EBI-948266">
        <id>O14901</id>
    </interactant>
    <interactant intactId="EBI-2514791">
        <id>Q96CS2</id>
        <label>HAUS1</label>
    </interactant>
    <organismsDiffer>false</organismsDiffer>
    <experiments>3</experiments>
</comment>
<comment type="interaction">
    <interactant intactId="EBI-948266">
        <id>O14901</id>
    </interactant>
    <interactant intactId="EBI-2558217">
        <id>Q68CZ6</id>
        <label>HAUS3</label>
    </interactant>
    <organismsDiffer>false</organismsDiffer>
    <experiments>3</experiments>
</comment>
<comment type="interaction">
    <interactant intactId="EBI-948266">
        <id>O14901</id>
    </interactant>
    <interactant intactId="EBI-395719">
        <id>Q99871</id>
        <label>HAUS7</label>
    </interactant>
    <organismsDiffer>false</organismsDiffer>
    <experiments>3</experiments>
</comment>
<comment type="interaction">
    <interactant intactId="EBI-948266">
        <id>O14901</id>
    </interactant>
    <interactant intactId="EBI-466029">
        <id>P42858</id>
        <label>HTT</label>
    </interactant>
    <organismsDiffer>false</organismsDiffer>
    <experiments>7</experiments>
</comment>
<comment type="interaction">
    <interactant intactId="EBI-948266">
        <id>O14901</id>
    </interactant>
    <interactant intactId="EBI-12141931">
        <id>Q8NDH6-2</id>
        <label>ICA1L</label>
    </interactant>
    <organismsDiffer>false</organismsDiffer>
    <experiments>3</experiments>
</comment>
<comment type="interaction">
    <interactant intactId="EBI-948266">
        <id>O14901</id>
    </interactant>
    <interactant intactId="EBI-12823003">
        <id>P80217-2</id>
        <label>IFI35</label>
    </interactant>
    <organismsDiffer>false</organismsDiffer>
    <experiments>3</experiments>
</comment>
<comment type="interaction">
    <interactant intactId="EBI-948266">
        <id>O14901</id>
    </interactant>
    <interactant intactId="EBI-11742277">
        <id>Q8IY31-2</id>
        <label>IFT20</label>
    </interactant>
    <organismsDiffer>false</organismsDiffer>
    <experiments>3</experiments>
</comment>
<comment type="interaction">
    <interactant intactId="EBI-948266">
        <id>O14901</id>
    </interactant>
    <interactant intactId="EBI-9091197">
        <id>Q8IY31-3</id>
        <label>IFT20</label>
    </interactant>
    <organismsDiffer>false</organismsDiffer>
    <experiments>3</experiments>
</comment>
<comment type="interaction">
    <interactant intactId="EBI-948266">
        <id>O14901</id>
    </interactant>
    <interactant intactId="EBI-13646303">
        <id>P08833</id>
        <label>IGFBP1</label>
    </interactant>
    <organismsDiffer>false</organismsDiffer>
    <experiments>3</experiments>
</comment>
<comment type="interaction">
    <interactant intactId="EBI-948266">
        <id>O14901</id>
    </interactant>
    <interactant intactId="EBI-2831948">
        <id>P22692</id>
        <label>IGFBP4</label>
    </interactant>
    <organismsDiffer>false</organismsDiffer>
    <experiments>3</experiments>
</comment>
<comment type="interaction">
    <interactant intactId="EBI-948266">
        <id>O14901</id>
    </interactant>
    <interactant intactId="EBI-17178971">
        <id>Q14005-2</id>
        <label>IL16</label>
    </interactant>
    <organismsDiffer>false</organismsDiffer>
    <experiments>3</experiments>
</comment>
<comment type="interaction">
    <interactant intactId="EBI-948266">
        <id>O14901</id>
    </interactant>
    <interactant intactId="EBI-6509505">
        <id>Q0VD86</id>
        <label>INCA1</label>
    </interactant>
    <organismsDiffer>false</organismsDiffer>
    <experiments>3</experiments>
</comment>
<comment type="interaction">
    <interactant intactId="EBI-948266">
        <id>O14901</id>
    </interactant>
    <interactant intactId="EBI-1237354">
        <id>Q86VI3</id>
        <label>IQGAP3</label>
    </interactant>
    <organismsDiffer>false</organismsDiffer>
    <experiments>3</experiments>
</comment>
<comment type="interaction">
    <interactant intactId="EBI-948266">
        <id>O14901</id>
    </interactant>
    <interactant intactId="EBI-10220600">
        <id>Q8NA54</id>
        <label>IQUB</label>
    </interactant>
    <organismsDiffer>false</organismsDiffer>
    <experiments>3</experiments>
</comment>
<comment type="interaction">
    <interactant intactId="EBI-948266">
        <id>O14901</id>
    </interactant>
    <interactant intactId="EBI-712105">
        <id>Q13352</id>
        <label>ITGB3BP</label>
    </interactant>
    <organismsDiffer>false</organismsDiffer>
    <experiments>6</experiments>
</comment>
<comment type="interaction">
    <interactant intactId="EBI-948266">
        <id>O14901</id>
    </interactant>
    <interactant intactId="EBI-25904181">
        <id>Q96I82</id>
        <label>KAZALD1</label>
    </interactant>
    <organismsDiffer>false</organismsDiffer>
    <experiments>3</experiments>
</comment>
<comment type="interaction">
    <interactant intactId="EBI-948266">
        <id>O14901</id>
    </interactant>
    <interactant intactId="EBI-25844799">
        <id>A1A512</id>
        <label>KIAA0355</label>
    </interactant>
    <organismsDiffer>false</organismsDiffer>
    <experiments>3</experiments>
</comment>
<comment type="interaction">
    <interactant intactId="EBI-948266">
        <id>O14901</id>
    </interactant>
    <interactant intactId="EBI-739493">
        <id>Q6ZU52</id>
        <label>KIAA0408</label>
    </interactant>
    <organismsDiffer>false</organismsDiffer>
    <experiments>3</experiments>
</comment>
<comment type="interaction">
    <interactant intactId="EBI-948266">
        <id>O14901</id>
    </interactant>
    <interactant intactId="EBI-17702098">
        <id>Q8IV33</id>
        <label>KIAA0825</label>
    </interactant>
    <organismsDiffer>false</organismsDiffer>
    <experiments>3</experiments>
</comment>
<comment type="interaction">
    <interactant intactId="EBI-948266">
        <id>O14901</id>
    </interactant>
    <interactant intactId="EBI-14069005">
        <id>Q9BVG8-5</id>
        <label>KIFC3</label>
    </interactant>
    <organismsDiffer>false</organismsDiffer>
    <experiments>3</experiments>
</comment>
<comment type="interaction">
    <interactant intactId="EBI-948266">
        <id>O14901</id>
    </interactant>
    <interactant intactId="EBI-1643885">
        <id>Q6P597</id>
        <label>KLC3</label>
    </interactant>
    <organismsDiffer>false</organismsDiffer>
    <experiments>3</experiments>
</comment>
<comment type="interaction">
    <interactant intactId="EBI-948266">
        <id>O14901</id>
    </interactant>
    <interactant intactId="EBI-2796400">
        <id>Q9UIH9</id>
        <label>KLF15</label>
    </interactant>
    <organismsDiffer>false</organismsDiffer>
    <experiments>3</experiments>
</comment>
<comment type="interaction">
    <interactant intactId="EBI-948266">
        <id>O14901</id>
    </interactant>
    <interactant intactId="EBI-8472267">
        <id>P57682</id>
        <label>KLF3</label>
    </interactant>
    <organismsDiffer>false</organismsDiffer>
    <experiments>3</experiments>
</comment>
<comment type="interaction">
    <interactant intactId="EBI-948266">
        <id>O14901</id>
    </interactant>
    <interactant intactId="EBI-2696013">
        <id>Q13887</id>
        <label>KLF5</label>
    </interactant>
    <organismsDiffer>false</organismsDiffer>
    <experiments>3</experiments>
</comment>
<comment type="interaction">
    <interactant intactId="EBI-948266">
        <id>O14901</id>
    </interactant>
    <interactant intactId="EBI-714379">
        <id>Q9Y2M5</id>
        <label>KLHL20</label>
    </interactant>
    <organismsDiffer>false</organismsDiffer>
    <experiments>3</experiments>
</comment>
<comment type="interaction">
    <interactant intactId="EBI-948266">
        <id>O14901</id>
    </interactant>
    <interactant intactId="EBI-8524663">
        <id>Q9UH77</id>
        <label>KLHL3</label>
    </interactant>
    <organismsDiffer>false</organismsDiffer>
    <experiments>3</experiments>
</comment>
<comment type="interaction">
    <interactant intactId="EBI-948266">
        <id>O14901</id>
    </interactant>
    <interactant intactId="EBI-6426390">
        <id>Q96NJ5</id>
        <label>KLHL32</label>
    </interactant>
    <organismsDiffer>false</organismsDiffer>
    <experiments>3</experiments>
</comment>
<comment type="interaction">
    <interactant intactId="EBI-948266">
        <id>O14901</id>
    </interactant>
    <interactant intactId="EBI-8473062">
        <id>Q8N1A0</id>
        <label>KRT222</label>
    </interactant>
    <organismsDiffer>false</organismsDiffer>
    <experiments>3</experiments>
</comment>
<comment type="interaction">
    <interactant intactId="EBI-948266">
        <id>O14901</id>
    </interactant>
    <interactant intactId="EBI-1049638">
        <id>Q14525</id>
        <label>KRT33B</label>
    </interactant>
    <organismsDiffer>false</organismsDiffer>
    <experiments>3</experiments>
</comment>
<comment type="interaction">
    <interactant intactId="EBI-948266">
        <id>O14901</id>
    </interactant>
    <interactant intactId="EBI-723416">
        <id>Q15012</id>
        <label>LAPTM4A</label>
    </interactant>
    <organismsDiffer>false</organismsDiffer>
    <experiments>3</experiments>
</comment>
<comment type="interaction">
    <interactant intactId="EBI-948266">
        <id>O14901</id>
    </interactant>
    <interactant intactId="EBI-1052558">
        <id>Q92615</id>
        <label>LARP4B</label>
    </interactant>
    <organismsDiffer>false</organismsDiffer>
    <experiments>3</experiments>
</comment>
<comment type="interaction">
    <interactant intactId="EBI-948266">
        <id>O14901</id>
    </interactant>
    <interactant intactId="EBI-9088829">
        <id>Q6DKI2</id>
        <label>LGALS9C</label>
    </interactant>
    <organismsDiffer>false</organismsDiffer>
    <experiments>3</experiments>
</comment>
<comment type="interaction">
    <interactant intactId="EBI-948266">
        <id>O14901</id>
    </interactant>
    <interactant intactId="EBI-749562">
        <id>Q96JB6</id>
        <label>LOXL4</label>
    </interactant>
    <organismsDiffer>false</organismsDiffer>
    <experiments>3</experiments>
</comment>
<comment type="interaction">
    <interactant intactId="EBI-948266">
        <id>O14901</id>
    </interactant>
    <interactant intactId="EBI-2350424">
        <id>Q9BV99</id>
        <label>LRRC61</label>
    </interactant>
    <organismsDiffer>false</organismsDiffer>
    <experiments>3</experiments>
</comment>
<comment type="interaction">
    <interactant intactId="EBI-948266">
        <id>O14901</id>
    </interactant>
    <interactant intactId="EBI-741355">
        <id>Q96LR2</id>
        <label>LURAP1</label>
    </interactant>
    <organismsDiffer>false</organismsDiffer>
    <experiments>3</experiments>
</comment>
<comment type="interaction">
    <interactant intactId="EBI-948266">
        <id>O14901</id>
    </interactant>
    <interactant intactId="EBI-741037">
        <id>Q9BRK4</id>
        <label>LZTS2</label>
    </interactant>
    <organismsDiffer>false</organismsDiffer>
    <experiments>3</experiments>
</comment>
<comment type="interaction">
    <interactant intactId="EBI-948266">
        <id>O14901</id>
    </interactant>
    <interactant intactId="EBI-12056869">
        <id>Q9UDY8-2</id>
        <label>MALT1</label>
    </interactant>
    <organismsDiffer>false</organismsDiffer>
    <experiments>3</experiments>
</comment>
<comment type="interaction">
    <interactant intactId="EBI-948266">
        <id>O14901</id>
    </interactant>
    <interactant intactId="EBI-3911344">
        <id>P27338</id>
        <label>MAOB</label>
    </interactant>
    <organismsDiffer>false</organismsDiffer>
    <experiments>3</experiments>
</comment>
<comment type="interaction">
    <interactant intactId="EBI-948266">
        <id>O14901</id>
    </interactant>
    <interactant intactId="EBI-394678">
        <id>Q13503</id>
        <label>MED21</label>
    </interactant>
    <organismsDiffer>false</organismsDiffer>
    <experiments>3</experiments>
</comment>
<comment type="interaction">
    <interactant intactId="EBI-948266">
        <id>O14901</id>
    </interactant>
    <interactant intactId="EBI-6165891">
        <id>Q14696</id>
        <label>MESD</label>
    </interactant>
    <organismsDiffer>false</organismsDiffer>
    <experiments>3</experiments>
</comment>
<comment type="interaction">
    <interactant intactId="EBI-948266">
        <id>O14901</id>
    </interactant>
    <interactant intactId="EBI-8487781">
        <id>Q8N6F8</id>
        <label>METTL27</label>
    </interactant>
    <organismsDiffer>false</organismsDiffer>
    <experiments>3</experiments>
</comment>
<comment type="interaction">
    <interactant intactId="EBI-948266">
        <id>O14901</id>
    </interactant>
    <interactant intactId="EBI-1104552">
        <id>Q9NYP9</id>
        <label>MIS18A</label>
    </interactant>
    <organismsDiffer>false</organismsDiffer>
    <experiments>3</experiments>
</comment>
<comment type="interaction">
    <interactant intactId="EBI-948266">
        <id>O14901</id>
    </interactant>
    <interactant intactId="EBI-14141314">
        <id>Q9HBH9-2</id>
        <label>MKNK2</label>
    </interactant>
    <organismsDiffer>false</organismsDiffer>
    <experiments>3</experiments>
</comment>
<comment type="interaction">
    <interactant intactId="EBI-948266">
        <id>O14901</id>
    </interactant>
    <interactant intactId="EBI-995714">
        <id>Q9Y605</id>
        <label>MRFAP1</label>
    </interactant>
    <organismsDiffer>false</organismsDiffer>
    <experiments>3</experiments>
</comment>
<comment type="interaction">
    <interactant intactId="EBI-948266">
        <id>O14901</id>
    </interactant>
    <interactant intactId="EBI-748896">
        <id>Q96HT8</id>
        <label>MRFAP1L1</label>
    </interactant>
    <organismsDiffer>false</organismsDiffer>
    <experiments>3</experiments>
</comment>
<comment type="interaction">
    <interactant intactId="EBI-948266">
        <id>O14901</id>
    </interactant>
    <interactant intactId="EBI-996616">
        <id>P02795</id>
        <label>MT2A</label>
    </interactant>
    <organismsDiffer>false</organismsDiffer>
    <experiments>3</experiments>
</comment>
<comment type="interaction">
    <interactant intactId="EBI-948266">
        <id>O14901</id>
    </interactant>
    <interactant intactId="EBI-6952711">
        <id>Q8WY64</id>
        <label>MYLIP</label>
    </interactant>
    <organismsDiffer>false</organismsDiffer>
    <experiments>3</experiments>
</comment>
<comment type="interaction">
    <interactant intactId="EBI-948266">
        <id>O14901</id>
    </interactant>
    <interactant intactId="EBI-10178578">
        <id>I6L9F6</id>
        <label>NEFL</label>
    </interactant>
    <organismsDiffer>false</organismsDiffer>
    <experiments>3</experiments>
</comment>
<comment type="interaction">
    <interactant intactId="EBI-948266">
        <id>O14901</id>
    </interactant>
    <interactant intactId="EBI-536725">
        <id>Q8IXH7</id>
        <label>NELFCD</label>
    </interactant>
    <organismsDiffer>false</organismsDiffer>
    <experiments>3</experiments>
</comment>
<comment type="interaction">
    <interactant intactId="EBI-948266">
        <id>O14901</id>
    </interactant>
    <interactant intactId="EBI-3908303">
        <id>Q13562</id>
        <label>NEUROD1</label>
    </interactant>
    <organismsDiffer>false</organismsDiffer>
    <experiments>3</experiments>
</comment>
<comment type="interaction">
    <interactant intactId="EBI-948266">
        <id>O14901</id>
    </interactant>
    <interactant intactId="EBI-11956831">
        <id>Q13952-2</id>
        <label>NFYC</label>
    </interactant>
    <organismsDiffer>false</organismsDiffer>
    <experiments>3</experiments>
</comment>
<comment type="interaction">
    <interactant intactId="EBI-948266">
        <id>O14901</id>
    </interactant>
    <interactant intactId="EBI-2802743">
        <id>Q6PHZ7</id>
        <label>NR2C2</label>
    </interactant>
    <organismsDiffer>false</organismsDiffer>
    <experiments>3</experiments>
</comment>
<comment type="interaction">
    <interactant intactId="EBI-948266">
        <id>O14901</id>
    </interactant>
    <interactant intactId="EBI-25905546">
        <id>Q9NXX6-2</id>
        <label>NSMCE4A</label>
    </interactant>
    <organismsDiffer>false</organismsDiffer>
    <experiments>3</experiments>
</comment>
<comment type="interaction">
    <interactant intactId="EBI-948266">
        <id>O14901</id>
    </interactant>
    <interactant intactId="EBI-741048">
        <id>Q7Z3B4</id>
        <label>NUP54</label>
    </interactant>
    <organismsDiffer>false</organismsDiffer>
    <experiments>3</experiments>
</comment>
<comment type="interaction">
    <interactant intactId="EBI-948266">
        <id>O14901</id>
    </interactant>
    <interactant intactId="EBI-8466445">
        <id>A5D8V7</id>
        <label>ODAD3</label>
    </interactant>
    <organismsDiffer>false</organismsDiffer>
    <experiments>3</experiments>
</comment>
<comment type="interaction">
    <interactant intactId="EBI-948266">
        <id>O14901</id>
    </interactant>
    <interactant intactId="EBI-536879">
        <id>O43482</id>
        <label>OIP5</label>
    </interactant>
    <organismsDiffer>false</organismsDiffer>
    <experiments>3</experiments>
</comment>
<comment type="interaction">
    <interactant intactId="EBI-948266">
        <id>O14901</id>
    </interactant>
    <interactant intactId="EBI-10698423">
        <id>Q9BZF3-6</id>
        <label>OSBPL6</label>
    </interactant>
    <organismsDiffer>false</organismsDiffer>
    <experiments>3</experiments>
</comment>
<comment type="interaction">
    <interactant intactId="EBI-948266">
        <id>O14901</id>
    </interactant>
    <interactant intactId="EBI-1058491">
        <id>Q96FW1</id>
        <label>OTUB1</label>
    </interactant>
    <organismsDiffer>false</organismsDiffer>
    <experiments>3</experiments>
</comment>
<comment type="interaction">
    <interactant intactId="EBI-948266">
        <id>O14901</id>
    </interactant>
    <interactant intactId="EBI-25830200">
        <id>Q6GQQ9-2</id>
        <label>OTUD7B</label>
    </interactant>
    <organismsDiffer>false</organismsDiffer>
    <experiments>3</experiments>
</comment>
<comment type="interaction">
    <interactant intactId="EBI-948266">
        <id>O14901</id>
    </interactant>
    <interactant intactId="EBI-6916492">
        <id>Q9NUU6</id>
        <label>OTULINL</label>
    </interactant>
    <organismsDiffer>false</organismsDiffer>
    <experiments>3</experiments>
</comment>
<comment type="interaction">
    <interactant intactId="EBI-948266">
        <id>O14901</id>
    </interactant>
    <interactant intactId="EBI-10488185">
        <id>Q9ULW8</id>
        <label>PADI3</label>
    </interactant>
    <organismsDiffer>false</organismsDiffer>
    <experiments>3</experiments>
</comment>
<comment type="interaction">
    <interactant intactId="EBI-948266">
        <id>O14901</id>
    </interactant>
    <interactant intactId="EBI-2957445">
        <id>Q9BPZ3</id>
        <label>PAIP2</label>
    </interactant>
    <organismsDiffer>false</organismsDiffer>
    <experiments>3</experiments>
</comment>
<comment type="interaction">
    <interactant intactId="EBI-948266">
        <id>O14901</id>
    </interactant>
    <interactant intactId="EBI-22012354">
        <id>Q9BR81</id>
        <label>PCDHGC3</label>
    </interactant>
    <organismsDiffer>false</organismsDiffer>
    <experiments>3</experiments>
</comment>
<comment type="interaction">
    <interactant intactId="EBI-948266">
        <id>O14901</id>
    </interactant>
    <interactant intactId="EBI-12386584">
        <id>P22061-2</id>
        <label>PCMT1</label>
    </interactant>
    <organismsDiffer>false</organismsDiffer>
    <experiments>3</experiments>
</comment>
<comment type="interaction">
    <interactant intactId="EBI-948266">
        <id>O14901</id>
    </interactant>
    <interactant intactId="EBI-2557276">
        <id>O15534</id>
        <label>PER1</label>
    </interactant>
    <organismsDiffer>false</organismsDiffer>
    <experiments>3</experiments>
</comment>
<comment type="interaction">
    <interactant intactId="EBI-948266">
        <id>O14901</id>
    </interactant>
    <interactant intactId="EBI-357275">
        <id>Q99471</id>
        <label>PFDN5</label>
    </interactant>
    <organismsDiffer>false</organismsDiffer>
    <experiments>3</experiments>
</comment>
<comment type="interaction">
    <interactant intactId="EBI-948266">
        <id>O14901</id>
    </interactant>
    <interactant intactId="EBI-11527347">
        <id>Q8IXK0-5</id>
        <label>PHC2</label>
    </interactant>
    <organismsDiffer>false</organismsDiffer>
    <experiments>3</experiments>
</comment>
<comment type="interaction">
    <interactant intactId="EBI-948266">
        <id>O14901</id>
    </interactant>
    <interactant intactId="EBI-722852">
        <id>Q9BUL5</id>
        <label>PHF23</label>
    </interactant>
    <organismsDiffer>false</organismsDiffer>
    <experiments>3</experiments>
</comment>
<comment type="interaction">
    <interactant intactId="EBI-948266">
        <id>O14901</id>
    </interactant>
    <interactant intactId="EBI-17630288">
        <id>P57054</id>
        <label>PIGP</label>
    </interactant>
    <organismsDiffer>false</organismsDiffer>
    <experiments>3</experiments>
</comment>
<comment type="interaction">
    <interactant intactId="EBI-948266">
        <id>O14901</id>
    </interactant>
    <interactant intactId="EBI-1373569">
        <id>P55347</id>
        <label>PKNOX1</label>
    </interactant>
    <organismsDiffer>false</organismsDiffer>
    <experiments>3</experiments>
</comment>
<comment type="interaction">
    <interactant intactId="EBI-948266">
        <id>O14901</id>
    </interactant>
    <interactant intactId="EBI-10694821">
        <id>Q6P1J6-2</id>
        <label>PLB1</label>
    </interactant>
    <organismsDiffer>false</organismsDiffer>
    <experiments>3</experiments>
</comment>
<comment type="interaction">
    <interactant intactId="EBI-948266">
        <id>O14901</id>
    </interactant>
    <interactant intactId="EBI-21503705">
        <id>Q58EX7-2</id>
        <label>PLEKHG4</label>
    </interactant>
    <organismsDiffer>false</organismsDiffer>
    <experiments>3</experiments>
</comment>
<comment type="interaction">
    <interactant intactId="EBI-948266">
        <id>O14901</id>
    </interactant>
    <interactant intactId="EBI-713832">
        <id>Q6P1K2</id>
        <label>PMF1</label>
    </interactant>
    <organismsDiffer>false</organismsDiffer>
    <experiments>3</experiments>
</comment>
<comment type="interaction">
    <interactant intactId="EBI-948266">
        <id>O14901</id>
    </interactant>
    <interactant intactId="EBI-25879276">
        <id>Q8N490-3</id>
        <label>PNKD</label>
    </interactant>
    <organismsDiffer>false</organismsDiffer>
    <experiments>3</experiments>
</comment>
<comment type="interaction">
    <interactant intactId="EBI-948266">
        <id>O14901</id>
    </interactant>
    <interactant intactId="EBI-25835994">
        <id>Q6ZMI0-5</id>
        <label>PPP1R21</label>
    </interactant>
    <organismsDiffer>false</organismsDiffer>
    <experiments>3</experiments>
</comment>
<comment type="interaction">
    <interactant intactId="EBI-948266">
        <id>O14901</id>
    </interactant>
    <interactant intactId="EBI-11058011">
        <id>P30154-2</id>
        <label>PPP2R1B</label>
    </interactant>
    <organismsDiffer>false</organismsDiffer>
    <experiments>3</experiments>
</comment>
<comment type="interaction">
    <interactant intactId="EBI-948266">
        <id>O14901</id>
    </interactant>
    <interactant intactId="EBI-743880">
        <id>Q8WUY3</id>
        <label>PRUNE2</label>
    </interactant>
    <organismsDiffer>false</organismsDiffer>
    <experiments>3</experiments>
</comment>
<comment type="interaction">
    <interactant intactId="EBI-948266">
        <id>O14901</id>
    </interactant>
    <interactant intactId="EBI-359710">
        <id>P35998</id>
        <label>PSMC2</label>
    </interactant>
    <organismsDiffer>false</organismsDiffer>
    <experiments>3</experiments>
</comment>
<comment type="interaction">
    <interactant intactId="EBI-948266">
        <id>O14901</id>
    </interactant>
    <interactant intactId="EBI-11984839">
        <id>Q96QF0-7</id>
        <label>RAB3IP</label>
    </interactant>
    <organismsDiffer>false</organismsDiffer>
    <experiments>3</experiments>
</comment>
<comment type="interaction">
    <interactant intactId="EBI-948266">
        <id>O14901</id>
    </interactant>
    <interactant intactId="EBI-722307">
        <id>P47736</id>
        <label>RAP1GAP</label>
    </interactant>
    <organismsDiffer>false</organismsDiffer>
    <experiments>3</experiments>
</comment>
<comment type="interaction">
    <interactant intactId="EBI-948266">
        <id>O14901</id>
    </interactant>
    <interactant intactId="EBI-948278">
        <id>Q15293</id>
        <label>RCN1</label>
    </interactant>
    <organismsDiffer>false</organismsDiffer>
    <experiments>3</experiments>
</comment>
<comment type="interaction">
    <interactant intactId="EBI-948266">
        <id>O14901</id>
    </interactant>
    <interactant intactId="EBI-745810">
        <id>Q96EN9</id>
        <label>REX1BD</label>
    </interactant>
    <organismsDiffer>false</organismsDiffer>
    <experiments>3</experiments>
</comment>
<comment type="interaction">
    <interactant intactId="EBI-948266">
        <id>O14901</id>
    </interactant>
    <interactant intactId="EBI-25834767">
        <id>P47804-3</id>
        <label>RGR</label>
    </interactant>
    <organismsDiffer>false</organismsDiffer>
    <experiments>3</experiments>
</comment>
<comment type="interaction">
    <interactant intactId="EBI-948266">
        <id>O14901</id>
    </interactant>
    <interactant intactId="EBI-3918154">
        <id>Q9UGC6</id>
        <label>RGS17</label>
    </interactant>
    <organismsDiffer>false</organismsDiffer>
    <experiments>3</experiments>
</comment>
<comment type="interaction">
    <interactant intactId="EBI-948266">
        <id>O14901</id>
    </interactant>
    <interactant intactId="EBI-948111">
        <id>Q96EP0</id>
        <label>RNF31</label>
    </interactant>
    <organismsDiffer>false</organismsDiffer>
    <experiments>3</experiments>
</comment>
<comment type="interaction">
    <interactant intactId="EBI-948266">
        <id>O14901</id>
    </interactant>
    <interactant intactId="EBI-1384149">
        <id>Q15349</id>
        <label>RPS6KA2</label>
    </interactant>
    <organismsDiffer>false</organismsDiffer>
    <experiments>3</experiments>
</comment>
<comment type="interaction">
    <interactant intactId="EBI-948266">
        <id>O14901</id>
    </interactant>
    <interactant intactId="EBI-1046616">
        <id>P51812</id>
        <label>RPS6KA3</label>
    </interactant>
    <organismsDiffer>false</organismsDiffer>
    <experiments>3</experiments>
</comment>
<comment type="interaction">
    <interactant intactId="EBI-948266">
        <id>O14901</id>
    </interactant>
    <interactant intactId="EBI-21622593">
        <id>O75676-2</id>
        <label>RPS6KA4</label>
    </interactant>
    <organismsDiffer>false</organismsDiffer>
    <experiments>3</experiments>
</comment>
<comment type="interaction">
    <interactant intactId="EBI-948266">
        <id>O14901</id>
    </interactant>
    <interactant intactId="EBI-25837959">
        <id>Q9BY12-3</id>
        <label>SCAPER</label>
    </interactant>
    <organismsDiffer>false</organismsDiffer>
    <experiments>3</experiments>
</comment>
<comment type="interaction">
    <interactant intactId="EBI-948266">
        <id>O14901</id>
    </interactant>
    <interactant intactId="EBI-358489">
        <id>Q96GM5</id>
        <label>SMARCD1</label>
    </interactant>
    <organismsDiffer>false</organismsDiffer>
    <experiments>3</experiments>
</comment>
<comment type="interaction">
    <interactant intactId="EBI-948266">
        <id>O14901</id>
    </interactant>
    <interactant intactId="EBI-747719">
        <id>Q96H20</id>
        <label>SNF8</label>
    </interactant>
    <organismsDiffer>false</organismsDiffer>
    <experiments>3</experiments>
</comment>
<comment type="interaction">
    <interactant intactId="EBI-948266">
        <id>O14901</id>
    </interactant>
    <interactant intactId="EBI-11946259">
        <id>Q8N0X2-4</id>
        <label>SPAG16</label>
    </interactant>
    <organismsDiffer>false</organismsDiffer>
    <experiments>3</experiments>
</comment>
<comment type="interaction">
    <interactant intactId="EBI-948266">
        <id>O14901</id>
    </interactant>
    <interactant intactId="EBI-10696971">
        <id>Q7Z6I5</id>
        <label>SPATA12</label>
    </interactant>
    <organismsDiffer>false</organismsDiffer>
    <experiments>3</experiments>
</comment>
<comment type="interaction">
    <interactant intactId="EBI-948266">
        <id>O14901</id>
    </interactant>
    <interactant intactId="EBI-18616594">
        <id>Q8IXS7</id>
        <label>SRGAP3</label>
    </interactant>
    <organismsDiffer>false</organismsDiffer>
    <experiments>3</experiments>
</comment>
<comment type="interaction">
    <interactant intactId="EBI-948266">
        <id>O14901</id>
    </interactant>
    <interactant intactId="EBI-1186538">
        <id>Q14765</id>
        <label>STAT4</label>
    </interactant>
    <organismsDiffer>false</organismsDiffer>
    <experiments>3</experiments>
</comment>
<comment type="interaction">
    <interactant intactId="EBI-948266">
        <id>O14901</id>
    </interactant>
    <interactant intactId="EBI-863797">
        <id>Q9NRP7</id>
        <label>STK36</label>
    </interactant>
    <organismsDiffer>false</organismsDiffer>
    <experiments>3</experiments>
</comment>
<comment type="interaction">
    <interactant intactId="EBI-948266">
        <id>O14901</id>
    </interactant>
    <interactant intactId="EBI-714135">
        <id>O75558</id>
        <label>STX11</label>
    </interactant>
    <organismsDiffer>false</organismsDiffer>
    <experiments>3</experiments>
</comment>
<comment type="interaction">
    <interactant intactId="EBI-948266">
        <id>O14901</id>
    </interactant>
    <interactant intactId="EBI-8484990">
        <id>Q8N4C7</id>
        <label>STX19</label>
    </interactant>
    <organismsDiffer>false</organismsDiffer>
    <experiments>3</experiments>
</comment>
<comment type="interaction">
    <interactant intactId="EBI-948266">
        <id>O14901</id>
    </interactant>
    <interactant intactId="EBI-960169">
        <id>P61764</id>
        <label>STXBP1</label>
    </interactant>
    <organismsDiffer>false</organismsDiffer>
    <experiments>3</experiments>
</comment>
<comment type="interaction">
    <interactant intactId="EBI-948266">
        <id>O14901</id>
    </interactant>
    <interactant intactId="EBI-10283466">
        <id>A1L190</id>
        <label>SYCE3</label>
    </interactant>
    <organismsDiffer>false</organismsDiffer>
    <experiments>3</experiments>
</comment>
<comment type="interaction">
    <interactant intactId="EBI-948266">
        <id>O14901</id>
    </interactant>
    <interactant intactId="EBI-473249">
        <id>O75528</id>
        <label>TADA3</label>
    </interactant>
    <organismsDiffer>false</organismsDiffer>
    <experiments>3</experiments>
</comment>
<comment type="interaction">
    <interactant intactId="EBI-948266">
        <id>O14901</id>
    </interactant>
    <interactant intactId="EBI-15904933">
        <id>O60907-2</id>
        <label>TBL1X</label>
    </interactant>
    <organismsDiffer>false</organismsDiffer>
    <experiments>3</experiments>
</comment>
<comment type="interaction">
    <interactant intactId="EBI-948266">
        <id>O14901</id>
    </interactant>
    <interactant intactId="EBI-765729">
        <id>Q9BZK7</id>
        <label>TBL1XR1</label>
    </interactant>
    <organismsDiffer>false</organismsDiffer>
    <experiments>3</experiments>
</comment>
<comment type="interaction">
    <interactant intactId="EBI-948266">
        <id>O14901</id>
    </interactant>
    <interactant intactId="EBI-2800552">
        <id>Q3YBR2</id>
        <label>TBRG1</label>
    </interactant>
    <organismsDiffer>false</organismsDiffer>
    <experiments>3</experiments>
</comment>
<comment type="interaction">
    <interactant intactId="EBI-948266">
        <id>O14901</id>
    </interactant>
    <interactant intactId="EBI-954089">
        <id>O15273</id>
        <label>TCAP</label>
    </interactant>
    <organismsDiffer>false</organismsDiffer>
    <experiments>3</experiments>
</comment>
<comment type="interaction">
    <interactant intactId="EBI-948266">
        <id>O14901</id>
    </interactant>
    <interactant intactId="EBI-11897462">
        <id>Q8N4U5</id>
        <label>TCP11L2</label>
    </interactant>
    <organismsDiffer>false</organismsDiffer>
    <experiments>3</experiments>
</comment>
<comment type="interaction">
    <interactant intactId="EBI-948266">
        <id>O14901</id>
    </interactant>
    <interactant intactId="EBI-2562799">
        <id>Q86WV5</id>
        <label>TEN1</label>
    </interactant>
    <organismsDiffer>false</organismsDiffer>
    <experiments>3</experiments>
</comment>
<comment type="interaction">
    <interactant intactId="EBI-948266">
        <id>O14901</id>
    </interactant>
    <interactant intactId="EBI-12090309">
        <id>Q9BXU0</id>
        <label>TEX12</label>
    </interactant>
    <organismsDiffer>false</organismsDiffer>
    <experiments>3</experiments>
</comment>
<comment type="interaction">
    <interactant intactId="EBI-948266">
        <id>O14901</id>
    </interactant>
    <interactant intactId="EBI-17438286">
        <id>Q8WTV1</id>
        <label>THAP3</label>
    </interactant>
    <organismsDiffer>false</organismsDiffer>
    <experiments>3</experiments>
</comment>
<comment type="interaction">
    <interactant intactId="EBI-948266">
        <id>O14901</id>
    </interactant>
    <interactant intactId="EBI-10276729">
        <id>Q8WUU8</id>
        <label>TMEM174</label>
    </interactant>
    <organismsDiffer>false</organismsDiffer>
    <experiments>3</experiments>
</comment>
<comment type="interaction">
    <interactant intactId="EBI-948266">
        <id>O14901</id>
    </interactant>
    <interactant intactId="EBI-9089156">
        <id>Q8IUR5-4</id>
        <label>TMTC1</label>
    </interactant>
    <organismsDiffer>false</organismsDiffer>
    <experiments>3</experiments>
</comment>
<comment type="interaction">
    <interactant intactId="EBI-948266">
        <id>O14901</id>
    </interactant>
    <interactant intactId="EBI-396540">
        <id>Q12888</id>
        <label>TP53BP1</label>
    </interactant>
    <organismsDiffer>false</organismsDiffer>
    <experiments>3</experiments>
</comment>
<comment type="interaction">
    <interactant intactId="EBI-948266">
        <id>O14901</id>
    </interactant>
    <interactant intactId="EBI-11525489">
        <id>Q86WT6-2</id>
        <label>TRIM69</label>
    </interactant>
    <organismsDiffer>false</organismsDiffer>
    <experiments>3</experiments>
</comment>
<comment type="interaction">
    <interactant intactId="EBI-948266">
        <id>O14901</id>
    </interactant>
    <interactant intactId="EBI-740411">
        <id>Q96A04</id>
        <label>TSACC</label>
    </interactant>
    <organismsDiffer>false</organismsDiffer>
    <experiments>3</experiments>
</comment>
<comment type="interaction">
    <interactant intactId="EBI-948266">
        <id>O14901</id>
    </interactant>
    <interactant intactId="EBI-12806590">
        <id>Q86WV8</id>
        <label>TSC1</label>
    </interactant>
    <organismsDiffer>false</organismsDiffer>
    <experiments>3</experiments>
</comment>
<comment type="interaction">
    <interactant intactId="EBI-948266">
        <id>O14901</id>
    </interactant>
    <interactant intactId="EBI-21353855">
        <id>Q99598</id>
        <label>TSNAX</label>
    </interactant>
    <organismsDiffer>false</organismsDiffer>
    <experiments>3</experiments>
</comment>
<comment type="interaction">
    <interactant intactId="EBI-948266">
        <id>O14901</id>
    </interactant>
    <interactant intactId="EBI-3914288">
        <id>O60636</id>
        <label>TSPAN2</label>
    </interactant>
    <organismsDiffer>false</organismsDiffer>
    <experiments>3</experiments>
</comment>
<comment type="interaction">
    <interactant intactId="EBI-948266">
        <id>O14901</id>
    </interactant>
    <interactant intactId="EBI-8656864">
        <id>Q6PF05</id>
        <label>TTC23L</label>
    </interactant>
    <organismsDiffer>false</organismsDiffer>
    <experiments>3</experiments>
</comment>
<comment type="interaction">
    <interactant intactId="EBI-948266">
        <id>O14901</id>
    </interactant>
    <interactant intactId="EBI-2555404">
        <id>Q6PID6</id>
        <label>TTC33</label>
    </interactant>
    <organismsDiffer>false</organismsDiffer>
    <experiments>3</experiments>
</comment>
<comment type="interaction">
    <interactant intactId="EBI-948266">
        <id>O14901</id>
    </interactant>
    <interactant intactId="EBI-707554">
        <id>O14530</id>
        <label>TXNDC9</label>
    </interactant>
    <organismsDiffer>false</organismsDiffer>
    <experiments>3</experiments>
</comment>
<comment type="interaction">
    <interactant intactId="EBI-948266">
        <id>O14901</id>
    </interactant>
    <interactant intactId="EBI-2339348">
        <id>P49459</id>
        <label>UBE2A</label>
    </interactant>
    <organismsDiffer>false</organismsDiffer>
    <experiments>3</experiments>
</comment>
<comment type="interaction">
    <interactant intactId="EBI-948266">
        <id>O14901</id>
    </interactant>
    <interactant intactId="EBI-25832660">
        <id>Q9H347</id>
        <label>UBQLN3</label>
    </interactant>
    <organismsDiffer>false</organismsDiffer>
    <experiments>3</experiments>
</comment>
<comment type="interaction">
    <interactant intactId="EBI-948266">
        <id>O14901</id>
    </interactant>
    <interactant intactId="EBI-12295223">
        <id>Q8IYU4</id>
        <label>UBQLNL</label>
    </interactant>
    <organismsDiffer>false</organismsDiffer>
    <experiments>3</experiments>
</comment>
<comment type="interaction">
    <interactant intactId="EBI-948266">
        <id>O14901</id>
    </interactant>
    <interactant intactId="EBI-743729">
        <id>Q16851</id>
        <label>UGP2</label>
    </interactant>
    <organismsDiffer>false</organismsDiffer>
    <experiments>3</experiments>
</comment>
<comment type="interaction">
    <interactant intactId="EBI-948266">
        <id>O14901</id>
    </interactant>
    <interactant intactId="EBI-749211">
        <id>Q9NYH9</id>
        <label>UTP6</label>
    </interactant>
    <organismsDiffer>false</organismsDiffer>
    <experiments>3</experiments>
</comment>
<comment type="interaction">
    <interactant intactId="EBI-948266">
        <id>O14901</id>
    </interactant>
    <interactant intactId="EBI-354022">
        <id>P45880</id>
        <label>VDAC2</label>
    </interactant>
    <organismsDiffer>false</organismsDiffer>
    <experiments>3</experiments>
</comment>
<comment type="interaction">
    <interactant intactId="EBI-948266">
        <id>O14901</id>
    </interactant>
    <interactant intactId="EBI-353844">
        <id>P08670</id>
        <label>VIM</label>
    </interactant>
    <organismsDiffer>false</organismsDiffer>
    <experiments>3</experiments>
</comment>
<comment type="interaction">
    <interactant intactId="EBI-948266">
        <id>O14901</id>
    </interactant>
    <interactant intactId="EBI-373380">
        <id>Q9H270</id>
        <label>VPS11</label>
    </interactant>
    <organismsDiffer>false</organismsDiffer>
    <experiments>3</experiments>
</comment>
<comment type="interaction">
    <interactant intactId="EBI-948266">
        <id>O14901</id>
    </interactant>
    <interactant intactId="EBI-2850578">
        <id>Q8NEZ2</id>
        <label>VPS37A</label>
    </interactant>
    <organismsDiffer>false</organismsDiffer>
    <experiments>3</experiments>
</comment>
<comment type="interaction">
    <interactant intactId="EBI-948266">
        <id>O14901</id>
    </interactant>
    <interactant intactId="EBI-6427899">
        <id>P58304</id>
        <label>VSX2</label>
    </interactant>
    <organismsDiffer>false</organismsDiffer>
    <experiments>3</experiments>
</comment>
<comment type="interaction">
    <interactant intactId="EBI-948266">
        <id>O14901</id>
    </interactant>
    <interactant intactId="EBI-7705033">
        <id>Q9BRX9</id>
        <label>WDR83</label>
    </interactant>
    <organismsDiffer>false</organismsDiffer>
    <experiments>3</experiments>
</comment>
<comment type="interaction">
    <interactant intactId="EBI-948266">
        <id>O14901</id>
    </interactant>
    <interactant intactId="EBI-21659356">
        <id>Q86U90</id>
        <label>YRDC</label>
    </interactant>
    <organismsDiffer>false</organismsDiffer>
    <experiments>3</experiments>
</comment>
<comment type="interaction">
    <interactant intactId="EBI-948266">
        <id>O14901</id>
    </interactant>
    <interactant intactId="EBI-10176632">
        <id>O43829</id>
        <label>ZBTB14</label>
    </interactant>
    <organismsDiffer>false</organismsDiffer>
    <experiments>3</experiments>
</comment>
<comment type="interaction">
    <interactant intactId="EBI-948266">
        <id>O14901</id>
    </interactant>
    <interactant intactId="EBI-12956041">
        <id>Q8IWT0-2</id>
        <label>ZBTB8OS</label>
    </interactant>
    <organismsDiffer>false</organismsDiffer>
    <experiments>3</experiments>
</comment>
<comment type="interaction">
    <interactant intactId="EBI-948266">
        <id>O14901</id>
    </interactant>
    <interactant intactId="EBI-10693326">
        <id>Q9H4I2-2</id>
        <label>ZHX3</label>
    </interactant>
    <organismsDiffer>false</organismsDiffer>
    <experiments>3</experiments>
</comment>
<comment type="interaction">
    <interactant intactId="EBI-948266">
        <id>O14901</id>
    </interactant>
    <interactant intactId="EBI-25835852">
        <id>Q96JL9-2</id>
        <label>ZNF333</label>
    </interactant>
    <organismsDiffer>false</organismsDiffer>
    <experiments>3</experiments>
</comment>
<comment type="interaction">
    <interactant intactId="EBI-948266">
        <id>O14901</id>
    </interactant>
    <interactant intactId="EBI-2462313">
        <id>Q9UL40</id>
        <label>ZNF346</label>
    </interactant>
    <organismsDiffer>false</organismsDiffer>
    <experiments>3</experiments>
</comment>
<comment type="interaction">
    <interactant intactId="EBI-948266">
        <id>O14901</id>
    </interactant>
    <interactant intactId="EBI-25831733">
        <id>Q96MN9-2</id>
        <label>ZNF488</label>
    </interactant>
    <organismsDiffer>false</organismsDiffer>
    <experiments>3</experiments>
</comment>
<comment type="interaction">
    <interactant intactId="EBI-948266">
        <id>O14901</id>
    </interactant>
    <interactant intactId="EBI-12021938">
        <id>Q8NBB4-2</id>
        <label>ZSCAN1</label>
    </interactant>
    <organismsDiffer>false</organismsDiffer>
    <experiments>3</experiments>
</comment>
<comment type="interaction">
    <interactant intactId="EBI-948266">
        <id>O14901</id>
    </interactant>
    <interactant intactId="EBI-1001132">
        <id>O95229</id>
        <label>ZWINT</label>
    </interactant>
    <organismsDiffer>false</organismsDiffer>
    <experiments>3</experiments>
</comment>
<comment type="interaction">
    <interactant intactId="EBI-948266">
        <id>O14901</id>
    </interactant>
    <interactant intactId="EBI-1538838">
        <id>Q2QGD7</id>
        <label>ZXDC</label>
    </interactant>
    <organismsDiffer>false</organismsDiffer>
    <experiments>3</experiments>
</comment>
<comment type="interaction">
    <interactant intactId="EBI-948266">
        <id>O14901</id>
    </interactant>
    <interactant intactId="EBI-12903728">
        <id>A0A384NQ31</id>
    </interactant>
    <organismsDiffer>false</organismsDiffer>
    <experiments>3</experiments>
</comment>
<comment type="interaction">
    <interactant intactId="EBI-948266">
        <id>O14901</id>
    </interactant>
    <interactant intactId="EBI-25831617">
        <id>B7Z3E8</id>
    </interactant>
    <organismsDiffer>false</organismsDiffer>
    <experiments>3</experiments>
</comment>
<comment type="subcellular location">
    <subcellularLocation>
        <location evidence="7">Nucleus</location>
    </subcellularLocation>
</comment>
<comment type="alternative products">
    <event type="alternative splicing"/>
    <isoform>
        <id>O14901-1</id>
        <name>1</name>
        <sequence type="displayed"/>
    </isoform>
    <isoform>
        <id>O14901-2</id>
        <name>2</name>
        <sequence type="described" ref="VSP_042695"/>
    </isoform>
</comment>
<comment type="tissue specificity">
    <text evidence="4">Ubiquitous. Higher expression in erythroid cells.</text>
</comment>
<comment type="induction">
    <text evidence="7">By TGFB1.</text>
</comment>
<comment type="disease" evidence="5">
    <disease id="DI-01948">
        <name>Maturity-onset diabetes of the young 7</name>
        <acronym>MODY7</acronym>
        <description>A form of diabetes that is characterized by an autosomal dominant mode of inheritance, onset in childhood or early adulthood (usually before 25 years of age), a primary defect in insulin secretion and frequent insulin-independence at the beginning of the disease.</description>
        <dbReference type="MIM" id="610508"/>
    </disease>
    <text>The disease is caused by variants affecting the gene represented in this entry.</text>
</comment>
<comment type="similarity">
    <text evidence="9">Belongs to the Sp1 C2H2-type zinc-finger protein family.</text>
</comment>
<comment type="caution">
    <text evidence="9">PubMed:11087666 sequence was originally thought to originate from mouse.</text>
</comment>
<sequence length="512" mass="55139">MHTPDFAGPDDARAVDIMDICESILERKRHDSERSTCSILEQTDMEAVEALVCMSSWGQRSQKGDLLRIRPLTPVSDSGDVTTTVHMDAATPELPKDFHSLSTLCITPPQSPDLVEPSTRTPVSPQVTDSKACTATDVLQSSAVVARALSGGAERGLLGLEPVPSSPCRAKGTSVIRHTGESPAACFPTIQTPDCRLSDSREGEEQLLGHFETLQDTHLTDSLLSTNLVSCQPCLHKSGGLLLTDKGQQAGWPGAVQTCSPKNYENDLPRKTTPLISVSVPAPPVLCQMIPVTGQSSMLPAFLKPPPQLSVGTVRPILAQAAPAPQPVFVGPAVPQGAVMLVLPQGALPPPAPCAANVMAAGNTKLLPLAPAPVFITSSQNCVPQVDFSRRRNYVCSFPGCRKTYFKSSHLKAHLRTHTGEKPFNCSWDGCDKKFARSDELSRHRRTHTGEKKFVCPVCDRRFMRSDHLTKHARRHMTTKKIPGWQAEVGKLNRIASAESPGSPLVSMPASA</sequence>
<accession>O14901</accession>
<accession>B4DZE7</accession>
<accession>Q9EPF4</accession>
<proteinExistence type="evidence at protein level"/>
<reference key="1">
    <citation type="journal article" date="1998" name="J. Biol. Chem.">
        <title>Molecular cloning and characterization of TIEG2 reveals a new subfamily of transforming growth factor-beta-inducible Sp1-like zinc finger-encoding genes involved in the regulation of cell growth.</title>
        <authorList>
            <person name="Cook T."/>
            <person name="Gebelein B."/>
            <person name="Mesa K."/>
            <person name="Mladek A."/>
            <person name="Urrutia R."/>
        </authorList>
    </citation>
    <scope>NUCLEOTIDE SEQUENCE [MRNA] (ISOFORM 1)</scope>
    <scope>FUNCTION</scope>
    <scope>SUBCELLULAR LOCATION</scope>
    <scope>INDUCTION</scope>
    <source>
        <tissue>Pancreas</tissue>
    </source>
</reference>
<reference key="2">
    <citation type="journal article" date="1999" name="Mol. Cell. Biol.">
        <title>FKLF, a novel Kruppel-like factor that activates human embryonic and fetal beta-like globin genes.</title>
        <authorList>
            <person name="Asano H."/>
            <person name="Li X.S."/>
            <person name="Stamatoyannopoulos G."/>
        </authorList>
    </citation>
    <scope>NUCLEOTIDE SEQUENCE [MRNA] (ISOFORM 1)</scope>
    <scope>FUNCTION</scope>
    <scope>TISSUE SPECIFICITY</scope>
    <source>
        <tissue>Erythroid cell</tissue>
    </source>
</reference>
<reference key="3">
    <citation type="journal article" date="2000" name="Genomics">
        <title>Identification of KLF13 and KLF14 (SP6), novel members of the SP/XKLF transcription factor family.</title>
        <authorList>
            <person name="Scohy S."/>
            <person name="Gabant P."/>
            <person name="Van Reeth T."/>
            <person name="Hertveldt V."/>
            <person name="Dreze P.-L."/>
            <person name="Van Vooren P."/>
            <person name="Riviere M."/>
            <person name="Szpirer J."/>
            <person name="Szpirer C."/>
        </authorList>
    </citation>
    <scope>NUCLEOTIDE SEQUENCE [MRNA] (ISOFORM 1)</scope>
    <source>
        <tissue>Hepatoma</tissue>
    </source>
</reference>
<reference key="4">
    <citation type="journal article" date="2004" name="Nat. Genet.">
        <title>Complete sequencing and characterization of 21,243 full-length human cDNAs.</title>
        <authorList>
            <person name="Ota T."/>
            <person name="Suzuki Y."/>
            <person name="Nishikawa T."/>
            <person name="Otsuki T."/>
            <person name="Sugiyama T."/>
            <person name="Irie R."/>
            <person name="Wakamatsu A."/>
            <person name="Hayashi K."/>
            <person name="Sato H."/>
            <person name="Nagai K."/>
            <person name="Kimura K."/>
            <person name="Makita H."/>
            <person name="Sekine M."/>
            <person name="Obayashi M."/>
            <person name="Nishi T."/>
            <person name="Shibahara T."/>
            <person name="Tanaka T."/>
            <person name="Ishii S."/>
            <person name="Yamamoto J."/>
            <person name="Saito K."/>
            <person name="Kawai Y."/>
            <person name="Isono Y."/>
            <person name="Nakamura Y."/>
            <person name="Nagahari K."/>
            <person name="Murakami K."/>
            <person name="Yasuda T."/>
            <person name="Iwayanagi T."/>
            <person name="Wagatsuma M."/>
            <person name="Shiratori A."/>
            <person name="Sudo H."/>
            <person name="Hosoiri T."/>
            <person name="Kaku Y."/>
            <person name="Kodaira H."/>
            <person name="Kondo H."/>
            <person name="Sugawara M."/>
            <person name="Takahashi M."/>
            <person name="Kanda K."/>
            <person name="Yokoi T."/>
            <person name="Furuya T."/>
            <person name="Kikkawa E."/>
            <person name="Omura Y."/>
            <person name="Abe K."/>
            <person name="Kamihara K."/>
            <person name="Katsuta N."/>
            <person name="Sato K."/>
            <person name="Tanikawa M."/>
            <person name="Yamazaki M."/>
            <person name="Ninomiya K."/>
            <person name="Ishibashi T."/>
            <person name="Yamashita H."/>
            <person name="Murakawa K."/>
            <person name="Fujimori K."/>
            <person name="Tanai H."/>
            <person name="Kimata M."/>
            <person name="Watanabe M."/>
            <person name="Hiraoka S."/>
            <person name="Chiba Y."/>
            <person name="Ishida S."/>
            <person name="Ono Y."/>
            <person name="Takiguchi S."/>
            <person name="Watanabe S."/>
            <person name="Yosida M."/>
            <person name="Hotuta T."/>
            <person name="Kusano J."/>
            <person name="Kanehori K."/>
            <person name="Takahashi-Fujii A."/>
            <person name="Hara H."/>
            <person name="Tanase T.-O."/>
            <person name="Nomura Y."/>
            <person name="Togiya S."/>
            <person name="Komai F."/>
            <person name="Hara R."/>
            <person name="Takeuchi K."/>
            <person name="Arita M."/>
            <person name="Imose N."/>
            <person name="Musashino K."/>
            <person name="Yuuki H."/>
            <person name="Oshima A."/>
            <person name="Sasaki N."/>
            <person name="Aotsuka S."/>
            <person name="Yoshikawa Y."/>
            <person name="Matsunawa H."/>
            <person name="Ichihara T."/>
            <person name="Shiohata N."/>
            <person name="Sano S."/>
            <person name="Moriya S."/>
            <person name="Momiyama H."/>
            <person name="Satoh N."/>
            <person name="Takami S."/>
            <person name="Terashima Y."/>
            <person name="Suzuki O."/>
            <person name="Nakagawa S."/>
            <person name="Senoh A."/>
            <person name="Mizoguchi H."/>
            <person name="Goto Y."/>
            <person name="Shimizu F."/>
            <person name="Wakebe H."/>
            <person name="Hishigaki H."/>
            <person name="Watanabe T."/>
            <person name="Sugiyama A."/>
            <person name="Takemoto M."/>
            <person name="Kawakami B."/>
            <person name="Yamazaki M."/>
            <person name="Watanabe K."/>
            <person name="Kumagai A."/>
            <person name="Itakura S."/>
            <person name="Fukuzumi Y."/>
            <person name="Fujimori Y."/>
            <person name="Komiyama M."/>
            <person name="Tashiro H."/>
            <person name="Tanigami A."/>
            <person name="Fujiwara T."/>
            <person name="Ono T."/>
            <person name="Yamada K."/>
            <person name="Fujii Y."/>
            <person name="Ozaki K."/>
            <person name="Hirao M."/>
            <person name="Ohmori Y."/>
            <person name="Kawabata A."/>
            <person name="Hikiji T."/>
            <person name="Kobatake N."/>
            <person name="Inagaki H."/>
            <person name="Ikema Y."/>
            <person name="Okamoto S."/>
            <person name="Okitani R."/>
            <person name="Kawakami T."/>
            <person name="Noguchi S."/>
            <person name="Itoh T."/>
            <person name="Shigeta K."/>
            <person name="Senba T."/>
            <person name="Matsumura K."/>
            <person name="Nakajima Y."/>
            <person name="Mizuno T."/>
            <person name="Morinaga M."/>
            <person name="Sasaki M."/>
            <person name="Togashi T."/>
            <person name="Oyama M."/>
            <person name="Hata H."/>
            <person name="Watanabe M."/>
            <person name="Komatsu T."/>
            <person name="Mizushima-Sugano J."/>
            <person name="Satoh T."/>
            <person name="Shirai Y."/>
            <person name="Takahashi Y."/>
            <person name="Nakagawa K."/>
            <person name="Okumura K."/>
            <person name="Nagase T."/>
            <person name="Nomura N."/>
            <person name="Kikuchi H."/>
            <person name="Masuho Y."/>
            <person name="Yamashita R."/>
            <person name="Nakai K."/>
            <person name="Yada T."/>
            <person name="Nakamura Y."/>
            <person name="Ohara O."/>
            <person name="Isogai T."/>
            <person name="Sugano S."/>
        </authorList>
    </citation>
    <scope>NUCLEOTIDE SEQUENCE [LARGE SCALE MRNA] (ISOFORM 2)</scope>
</reference>
<reference key="5">
    <citation type="journal article" date="2005" name="Nature">
        <title>Generation and annotation of the DNA sequences of human chromosomes 2 and 4.</title>
        <authorList>
            <person name="Hillier L.W."/>
            <person name="Graves T.A."/>
            <person name="Fulton R.S."/>
            <person name="Fulton L.A."/>
            <person name="Pepin K.H."/>
            <person name="Minx P."/>
            <person name="Wagner-McPherson C."/>
            <person name="Layman D."/>
            <person name="Wylie K."/>
            <person name="Sekhon M."/>
            <person name="Becker M.C."/>
            <person name="Fewell G.A."/>
            <person name="Delehaunty K.D."/>
            <person name="Miner T.L."/>
            <person name="Nash W.E."/>
            <person name="Kremitzki C."/>
            <person name="Oddy L."/>
            <person name="Du H."/>
            <person name="Sun H."/>
            <person name="Bradshaw-Cordum H."/>
            <person name="Ali J."/>
            <person name="Carter J."/>
            <person name="Cordes M."/>
            <person name="Harris A."/>
            <person name="Isak A."/>
            <person name="van Brunt A."/>
            <person name="Nguyen C."/>
            <person name="Du F."/>
            <person name="Courtney L."/>
            <person name="Kalicki J."/>
            <person name="Ozersky P."/>
            <person name="Abbott S."/>
            <person name="Armstrong J."/>
            <person name="Belter E.A."/>
            <person name="Caruso L."/>
            <person name="Cedroni M."/>
            <person name="Cotton M."/>
            <person name="Davidson T."/>
            <person name="Desai A."/>
            <person name="Elliott G."/>
            <person name="Erb T."/>
            <person name="Fronick C."/>
            <person name="Gaige T."/>
            <person name="Haakenson W."/>
            <person name="Haglund K."/>
            <person name="Holmes A."/>
            <person name="Harkins R."/>
            <person name="Kim K."/>
            <person name="Kruchowski S.S."/>
            <person name="Strong C.M."/>
            <person name="Grewal N."/>
            <person name="Goyea E."/>
            <person name="Hou S."/>
            <person name="Levy A."/>
            <person name="Martinka S."/>
            <person name="Mead K."/>
            <person name="McLellan M.D."/>
            <person name="Meyer R."/>
            <person name="Randall-Maher J."/>
            <person name="Tomlinson C."/>
            <person name="Dauphin-Kohlberg S."/>
            <person name="Kozlowicz-Reilly A."/>
            <person name="Shah N."/>
            <person name="Swearengen-Shahid S."/>
            <person name="Snider J."/>
            <person name="Strong J.T."/>
            <person name="Thompson J."/>
            <person name="Yoakum M."/>
            <person name="Leonard S."/>
            <person name="Pearman C."/>
            <person name="Trani L."/>
            <person name="Radionenko M."/>
            <person name="Waligorski J.E."/>
            <person name="Wang C."/>
            <person name="Rock S.M."/>
            <person name="Tin-Wollam A.-M."/>
            <person name="Maupin R."/>
            <person name="Latreille P."/>
            <person name="Wendl M.C."/>
            <person name="Yang S.-P."/>
            <person name="Pohl C."/>
            <person name="Wallis J.W."/>
            <person name="Spieth J."/>
            <person name="Bieri T.A."/>
            <person name="Berkowicz N."/>
            <person name="Nelson J.O."/>
            <person name="Osborne J."/>
            <person name="Ding L."/>
            <person name="Meyer R."/>
            <person name="Sabo A."/>
            <person name="Shotland Y."/>
            <person name="Sinha P."/>
            <person name="Wohldmann P.E."/>
            <person name="Cook L.L."/>
            <person name="Hickenbotham M.T."/>
            <person name="Eldred J."/>
            <person name="Williams D."/>
            <person name="Jones T.A."/>
            <person name="She X."/>
            <person name="Ciccarelli F.D."/>
            <person name="Izaurralde E."/>
            <person name="Taylor J."/>
            <person name="Schmutz J."/>
            <person name="Myers R.M."/>
            <person name="Cox D.R."/>
            <person name="Huang X."/>
            <person name="McPherson J.D."/>
            <person name="Mardis E.R."/>
            <person name="Clifton S.W."/>
            <person name="Warren W.C."/>
            <person name="Chinwalla A.T."/>
            <person name="Eddy S.R."/>
            <person name="Marra M.A."/>
            <person name="Ovcharenko I."/>
            <person name="Furey T.S."/>
            <person name="Miller W."/>
            <person name="Eichler E.E."/>
            <person name="Bork P."/>
            <person name="Suyama M."/>
            <person name="Torrents D."/>
            <person name="Waterston R.H."/>
            <person name="Wilson R.K."/>
        </authorList>
    </citation>
    <scope>NUCLEOTIDE SEQUENCE [LARGE SCALE GENOMIC DNA]</scope>
</reference>
<reference key="6">
    <citation type="submission" date="2005-09" db="EMBL/GenBank/DDBJ databases">
        <authorList>
            <person name="Mural R.J."/>
            <person name="Istrail S."/>
            <person name="Sutton G.G."/>
            <person name="Florea L."/>
            <person name="Halpern A.L."/>
            <person name="Mobarry C.M."/>
            <person name="Lippert R."/>
            <person name="Walenz B."/>
            <person name="Shatkay H."/>
            <person name="Dew I."/>
            <person name="Miller J.R."/>
            <person name="Flanigan M.J."/>
            <person name="Edwards N.J."/>
            <person name="Bolanos R."/>
            <person name="Fasulo D."/>
            <person name="Halldorsson B.V."/>
            <person name="Hannenhalli S."/>
            <person name="Turner R."/>
            <person name="Yooseph S."/>
            <person name="Lu F."/>
            <person name="Nusskern D.R."/>
            <person name="Shue B.C."/>
            <person name="Zheng X.H."/>
            <person name="Zhong F."/>
            <person name="Delcher A.L."/>
            <person name="Huson D.H."/>
            <person name="Kravitz S.A."/>
            <person name="Mouchard L."/>
            <person name="Reinert K."/>
            <person name="Remington K.A."/>
            <person name="Clark A.G."/>
            <person name="Waterman M.S."/>
            <person name="Eichler E.E."/>
            <person name="Adams M.D."/>
            <person name="Hunkapiller M.W."/>
            <person name="Myers E.W."/>
            <person name="Venter J.C."/>
        </authorList>
    </citation>
    <scope>NUCLEOTIDE SEQUENCE [LARGE SCALE GENOMIC DNA]</scope>
</reference>
<reference key="7">
    <citation type="journal article" date="2004" name="Genome Res.">
        <title>The status, quality, and expansion of the NIH full-length cDNA project: the Mammalian Gene Collection (MGC).</title>
        <authorList>
            <consortium name="The MGC Project Team"/>
        </authorList>
    </citation>
    <scope>NUCLEOTIDE SEQUENCE [LARGE SCALE MRNA] (ISOFORM 1)</scope>
    <source>
        <tissue>Placenta</tissue>
    </source>
</reference>
<reference key="8">
    <citation type="journal article" date="2005" name="J. Biol. Chem.">
        <title>{gamma}-Globin gene expression in chemical inducer of dimerization (CID)-dependent multipotential cells established from human {beta}-globin locus yeast artificial chromosome ({beta}-YAC) transgenic mice.</title>
        <authorList>
            <person name="Blau C.A."/>
            <person name="Barbas C.F."/>
            <person name="Bomhoff A.L."/>
            <person name="Neades R."/>
            <person name="Yan J."/>
            <person name="Navas P.A."/>
            <person name="Peterson K.R."/>
        </authorList>
    </citation>
    <scope>FUNCTION</scope>
</reference>
<reference key="9">
    <citation type="journal article" date="2013" name="J. Proteome Res.">
        <title>Toward a comprehensive characterization of a human cancer cell phosphoproteome.</title>
        <authorList>
            <person name="Zhou H."/>
            <person name="Di Palma S."/>
            <person name="Preisinger C."/>
            <person name="Peng M."/>
            <person name="Polat A.N."/>
            <person name="Heck A.J."/>
            <person name="Mohammed S."/>
        </authorList>
    </citation>
    <scope>PHOSPHORYLATION [LARGE SCALE ANALYSIS] AT SER-124</scope>
    <scope>IDENTIFICATION BY MASS SPECTROMETRY [LARGE SCALE ANALYSIS]</scope>
    <source>
        <tissue>Cervix carcinoma</tissue>
    </source>
</reference>
<reference key="10">
    <citation type="journal article" date="2005" name="Proc. Natl. Acad. Sci. U.S.A.">
        <title>Role of transcription factor KLF11 and its diabetes-associated gene variants in pancreatic beta cell function.</title>
        <authorList>
            <person name="Neve B."/>
            <person name="Fernandez-Zapico M.E."/>
            <person name="Ashkenazi-Katalan V."/>
            <person name="Dina C."/>
            <person name="Hamid Y.H."/>
            <person name="Joly E."/>
            <person name="Vaillant E."/>
            <person name="Benmezroua Y."/>
            <person name="Durand E."/>
            <person name="Bakaher N."/>
            <person name="Delannoy V."/>
            <person name="Vaxillaire M."/>
            <person name="Cook T."/>
            <person name="Dallinga-Thie G.M."/>
            <person name="Jansen H."/>
            <person name="Charles M.-A."/>
            <person name="Clement K."/>
            <person name="Galan P."/>
            <person name="Hercberg S."/>
            <person name="Helbecque N."/>
            <person name="Charpentier G."/>
            <person name="Prentki M."/>
            <person name="Hansen T."/>
            <person name="Pedersen O."/>
            <person name="Urrutia R."/>
            <person name="Melloul D."/>
            <person name="Froguel P."/>
        </authorList>
    </citation>
    <scope>VARIANTS MODY7 MET-220 AND SER-347</scope>
    <scope>VARIANT ARG-62</scope>
    <scope>CHARACTERIZATION OF VARIANTS MODY7 MET-220 AND SER-347</scope>
    <scope>CHARACTERIZATION OF VARIANT ARG-62</scope>
    <scope>INTERACTION WITH SIN3A</scope>
</reference>
<evidence type="ECO:0000250" key="1">
    <source>
        <dbReference type="UniProtKB" id="Q8K1S5"/>
    </source>
</evidence>
<evidence type="ECO:0000255" key="2">
    <source>
        <dbReference type="PROSITE-ProRule" id="PRU00042"/>
    </source>
</evidence>
<evidence type="ECO:0000256" key="3">
    <source>
        <dbReference type="SAM" id="MobiDB-lite"/>
    </source>
</evidence>
<evidence type="ECO:0000269" key="4">
    <source>
    </source>
</evidence>
<evidence type="ECO:0000269" key="5">
    <source>
    </source>
</evidence>
<evidence type="ECO:0000269" key="6">
    <source>
    </source>
</evidence>
<evidence type="ECO:0000269" key="7">
    <source>
    </source>
</evidence>
<evidence type="ECO:0000303" key="8">
    <source>
    </source>
</evidence>
<evidence type="ECO:0000305" key="9"/>
<evidence type="ECO:0007744" key="10">
    <source>
    </source>
</evidence>
<feature type="chain" id="PRO_0000047180" description="Krueppel-like factor 11">
    <location>
        <begin position="1"/>
        <end position="512"/>
    </location>
</feature>
<feature type="zinc finger region" description="C2H2-type 1" evidence="2">
    <location>
        <begin position="394"/>
        <end position="418"/>
    </location>
</feature>
<feature type="zinc finger region" description="C2H2-type 2" evidence="2">
    <location>
        <begin position="424"/>
        <end position="448"/>
    </location>
</feature>
<feature type="zinc finger region" description="C2H2-type 3" evidence="2">
    <location>
        <begin position="454"/>
        <end position="476"/>
    </location>
</feature>
<feature type="region of interest" description="Disordered" evidence="3">
    <location>
        <begin position="109"/>
        <end position="128"/>
    </location>
</feature>
<feature type="compositionally biased region" description="Polar residues" evidence="3">
    <location>
        <begin position="118"/>
        <end position="128"/>
    </location>
</feature>
<feature type="modified residue" description="Phosphoserine" evidence="10">
    <location>
        <position position="124"/>
    </location>
</feature>
<feature type="splice variant" id="VSP_042695" description="In isoform 2." evidence="8">
    <location>
        <begin position="1"/>
        <end position="17"/>
    </location>
</feature>
<feature type="sequence variant" id="VAR_031522" description="High frequency in individuals with diabetes mellitus type 2; increased repression activity; increased binding to SIN3A; impairs activation of insulin promoter; dbSNP:rs35927125." evidence="5">
    <original>Q</original>
    <variation>R</variation>
    <location>
        <position position="62"/>
    </location>
</feature>
<feature type="sequence variant" id="VAR_031523" description="In MODY7; absent in one family member with diabetes; increased repression activity; no alteration in binding affinity to SIN3A; dbSNP:rs34336420." evidence="5">
    <original>T</original>
    <variation>M</variation>
    <location>
        <position position="220"/>
    </location>
</feature>
<feature type="sequence variant" id="VAR_031524" description="In MODY7; increased repression activity; no alteration in binding affinity to SIN3A; dbSNP:rs121912645." evidence="5">
    <original>A</original>
    <variation>S</variation>
    <location>
        <position position="347"/>
    </location>
</feature>
<feature type="sequence variant" id="VAR_052717" description="In dbSNP:rs35476458.">
    <original>S</original>
    <variation>F</variation>
    <location>
        <position position="378"/>
    </location>
</feature>
<feature type="sequence conflict" description="In Ref. 3." evidence="9" ref="3">
    <original>P</original>
    <variation>S</variation>
    <location>
        <position position="125"/>
    </location>
</feature>
<feature type="sequence conflict" description="In Ref. 3." evidence="9" ref="3">
    <original>VVARALS</original>
    <variation>QWPDSD</variation>
    <location>
        <begin position="144"/>
        <end position="150"/>
    </location>
</feature>
<feature type="sequence conflict" description="In Ref. 3." evidence="9" ref="3">
    <original>P</original>
    <variation>L</variation>
    <location>
        <position position="371"/>
    </location>
</feature>
<feature type="sequence conflict" description="In Ref. 3." evidence="9" ref="3">
    <original>L</original>
    <variation>V</variation>
    <location>
        <position position="415"/>
    </location>
</feature>